<organism>
    <name type="scientific">Homo sapiens</name>
    <name type="common">Human</name>
    <dbReference type="NCBI Taxonomy" id="9606"/>
    <lineage>
        <taxon>Eukaryota</taxon>
        <taxon>Metazoa</taxon>
        <taxon>Chordata</taxon>
        <taxon>Craniata</taxon>
        <taxon>Vertebrata</taxon>
        <taxon>Euteleostomi</taxon>
        <taxon>Mammalia</taxon>
        <taxon>Eutheria</taxon>
        <taxon>Euarchontoglires</taxon>
        <taxon>Primates</taxon>
        <taxon>Haplorrhini</taxon>
        <taxon>Catarrhini</taxon>
        <taxon>Hominidae</taxon>
        <taxon>Homo</taxon>
    </lineage>
</organism>
<gene>
    <name type="primary">NUP153</name>
</gene>
<comment type="function">
    <text evidence="6 8 15">Component of the nuclear pore complex (NPC), a complex required for the trafficking across the nuclear envelope. Functions as a scaffolding element in the nuclear phase of the NPC essential for normal nucleocytoplasmic transport of proteins and mRNAs. Involved in the quality control and retention of unspliced mRNAs in the nucleus; in association with TPR, regulates the nuclear export of unspliced mRNA species bearing constitutive transport element (CTE) in a NXF1- and KHDRBS1-independent manner. Mediates TPR anchoring to the nuclear membrane at NPC. The repeat-containing domain may be involved in anchoring other components of the NPC to the pore membrane. Possible DNA-binding subunit of the nuclear pore complex (NPC).</text>
</comment>
<comment type="function">
    <text evidence="18 20 21">(Microbial infection) Interacts with HIV-1 caspid protein P24 and thereby promotes the integration of the virus in the nucleus of non-dividing cells (in vitro).</text>
</comment>
<comment type="function">
    <text evidence="20 22">(Microbial infection) Binds HIV-2 protein vpx and thereby promotes the nuclear translocation of the lentiviral genome (in vitro).</text>
</comment>
<comment type="cofactor">
    <cofactor evidence="1">
        <name>Zn(2+)</name>
        <dbReference type="ChEBI" id="CHEBI:29105"/>
    </cofactor>
    <text evidence="1">Binds at least 4 zinc ions per subunit.</text>
</comment>
<comment type="subunit">
    <text evidence="2 5 6 8 11 14 15 16 19">Part of the nuclear pore complex (NPC) (PubMed:15229283). Interacts with TPR (via coiled coil region); the interaction is direct and provides a link between the core structure and the TPR-containing nuclear basket of the nuclear pore complex (NPC) (PubMed:12802065, PubMed:20133940). Interacts with HIKESHI (PubMed:22541429). Interacts with SENP2. Interacts with XPO5 (PubMed:11777942). Interacts with RAN; the interaction occurs in a GTP- and GDP-independent manner (By similarity). Interacts with MCM3AP isoform GANP; this interaction is required for GANP localization at the nuclear pore complex (PubMed:20005110, PubMed:23652018). Interacts with MAPK1 (PubMed:22253824).</text>
</comment>
<comment type="subunit">
    <text evidence="18 20 21">(Microbial infection) Interacts (via C-terminus) with HIV-1 capsid protein p24 (CA) (via N-terminus).</text>
</comment>
<comment type="subunit">
    <text evidence="10">(Microbial infection) Interacts with HIV-1 integrase; this interaction might play a role in nuclear import of HIV pre-integration complex.</text>
</comment>
<comment type="subunit">
    <text evidence="13">(Microbial infection) Interacts with hepatitis B virus capsid protein; this interaction probably plays a role in nuclear import of HBV genome.</text>
</comment>
<comment type="subunit">
    <text evidence="17">(Microbial infection) Interacts with Epstein-barr virus BGLF4; this interaction allows BGLF4 nuclear entry.</text>
</comment>
<comment type="subunit">
    <text evidence="22">(Microbial infection) Interacts with HIV-2 virus protein vpx; this interaction might promote vpx nuclear entry.</text>
</comment>
<comment type="interaction">
    <interactant intactId="EBI-286779">
        <id>P49790</id>
    </interactant>
    <interactant intactId="EBI-1059294">
        <id>P29323</id>
        <label>EPHB2</label>
    </interactant>
    <organismsDiffer>false</organismsDiffer>
    <experiments>2</experiments>
</comment>
<comment type="interaction">
    <interactant intactId="EBI-286779">
        <id>P49790</id>
    </interactant>
    <interactant intactId="EBI-286758">
        <id>Q14974</id>
        <label>KPNB1</label>
    </interactant>
    <organismsDiffer>false</organismsDiffer>
    <experiments>9</experiments>
</comment>
<comment type="interaction">
    <interactant intactId="EBI-286779">
        <id>P49790</id>
    </interactant>
    <interactant intactId="EBI-6932370">
        <id>Q16539-3</id>
        <label>MAPK14</label>
    </interactant>
    <organismsDiffer>false</organismsDiffer>
    <experiments>2</experiments>
</comment>
<comment type="interaction">
    <interactant intactId="EBI-286779">
        <id>P49790</id>
    </interactant>
    <interactant intactId="EBI-286779">
        <id>P49790</id>
        <label>NUP153</label>
    </interactant>
    <organismsDiffer>false</organismsDiffer>
    <experiments>4</experiments>
</comment>
<comment type="interaction">
    <interactant intactId="EBI-286779">
        <id>P49790</id>
    </interactant>
    <interactant intactId="EBI-540580">
        <id>P70168</id>
        <label>Kpnb1</label>
    </interactant>
    <organismsDiffer>true</organismsDiffer>
    <experiments>2</experiments>
</comment>
<comment type="subcellular location">
    <subcellularLocation>
        <location evidence="23">Nucleus</location>
    </subcellularLocation>
    <subcellularLocation>
        <location>Nucleus membrane</location>
    </subcellularLocation>
    <subcellularLocation>
        <location>Nucleus</location>
        <location>Nuclear pore complex</location>
    </subcellularLocation>
    <text evidence="1 23">Tightly associated with the nuclear membrane and lamina (By similarity). Localized to the nucleoplasmic side of the nuclear pore complex (NPC) core structure, forming a fibrous structure called the nuclear basket. Dissociates from the NPC structure early during prophase of mitosis. Integrated in the newly assembled nuclear envelope of postmitotic cells early in G1. Colocalized with NUP98 and TPR to the nuclear basket at the nucleoplasmic side of the NPC. Detected in diffuse and discrete intranuclear foci. Remained localized to the nuclear membrane after poliovirus (PV) infection. Colocalizes with NUP210L at the nuclear periphery in round spermatids and at the caudal extremity in elongating spermatids (PubMed:38129135).</text>
</comment>
<comment type="alternative products">
    <event type="alternative splicing"/>
    <isoform>
        <id>P49790-1</id>
        <name>1</name>
        <sequence type="displayed"/>
    </isoform>
    <isoform>
        <id>P49790-2</id>
        <name>2</name>
        <sequence type="described" ref="VSP_054265"/>
    </isoform>
    <isoform>
        <id>P49790-3</id>
        <name>3</name>
        <sequence type="described" ref="VSP_055134"/>
    </isoform>
</comment>
<comment type="domain">
    <text evidence="27">Contains FG repeats. FG repeats are interaction sites for karyopherins (importins, exportins) and form probably an affinity gradient, guiding the transport proteins unidirectionally with their cargo through the NPC. FG repeat regions are highly flexible and lack ordered secondary structure. The overall conservation of FG repeats regarding exact sequence, spacing, and repeat unit length is limited.</text>
</comment>
<comment type="domain">
    <text evidence="20 21">(Microbial infection) FG repeats mediates interaction with HIV-1 capsid protein p24 (CA).</text>
</comment>
<comment type="PTM">
    <text evidence="1">Phosphorylated in interphase, hyperphosphorylated during mitosis. May play a role in the reversible disassembly of the nuclear pore complex during mitosis (By similarity).</text>
</comment>
<comment type="PTM">
    <text>Proteolytically degraded after poliovirus (PV) infection; degradation is partial and NCP- and TPR-binding domains withstand degradation.</text>
</comment>
<comment type="PTM">
    <text evidence="12">O-glycosylated during cytokinesis at sites identical or close to phosphorylation sites, this interferes with the phosphorylation status.</text>
</comment>
<comment type="disease">
    <text evidence="23">The variant p.Pro485Leu has been identified in a patient with spermatogenic failure. This patient also carried a homozygous loss-of-function variant affecting a splice site in the NUP210L gene, thought to be the cause of the disease. As NUP210L knockout male mice are fertile, it has been proposed that the increased phenotypic severity associated with NUP210L loss in the patient was due to the presence of the additional NUP153 variant. However, interspecies divergence in the nuclear pore function of NUP210L in round spermatids cannot be ruled out.</text>
</comment>
<comment type="similarity">
    <text evidence="27">Belongs to the NUP153 family.</text>
</comment>
<comment type="sequence caution" evidence="27">
    <conflict type="erroneous initiation">
        <sequence resource="EMBL-CDS" id="BAE06106"/>
    </conflict>
    <text>Extended N-terminus.</text>
</comment>
<accession>P49790</accession>
<accession>B4DIK2</accession>
<accession>E7EPX5</accession>
<accession>F6QR24</accession>
<accession>Q4LE47</accession>
<accession>Q5T9I7</accession>
<accession>Q7Z743</accession>
<evidence type="ECO:0000250" key="1"/>
<evidence type="ECO:0000250" key="2">
    <source>
        <dbReference type="UniProtKB" id="P49791"/>
    </source>
</evidence>
<evidence type="ECO:0000255" key="3">
    <source>
        <dbReference type="PROSITE-ProRule" id="PRU00322"/>
    </source>
</evidence>
<evidence type="ECO:0000256" key="4">
    <source>
        <dbReference type="SAM" id="MobiDB-lite"/>
    </source>
</evidence>
<evidence type="ECO:0000269" key="5">
    <source>
    </source>
</evidence>
<evidence type="ECO:0000269" key="6">
    <source>
    </source>
</evidence>
<evidence type="ECO:0000269" key="7">
    <source>
    </source>
</evidence>
<evidence type="ECO:0000269" key="8">
    <source>
    </source>
</evidence>
<evidence type="ECO:0000269" key="9">
    <source>
    </source>
</evidence>
<evidence type="ECO:0000269" key="10">
    <source>
    </source>
</evidence>
<evidence type="ECO:0000269" key="11">
    <source>
    </source>
</evidence>
<evidence type="ECO:0000269" key="12">
    <source>
    </source>
</evidence>
<evidence type="ECO:0000269" key="13">
    <source>
    </source>
</evidence>
<evidence type="ECO:0000269" key="14">
    <source>
    </source>
</evidence>
<evidence type="ECO:0000269" key="15">
    <source>
    </source>
</evidence>
<evidence type="ECO:0000269" key="16">
    <source>
    </source>
</evidence>
<evidence type="ECO:0000269" key="17">
    <source>
    </source>
</evidence>
<evidence type="ECO:0000269" key="18">
    <source>
    </source>
</evidence>
<evidence type="ECO:0000269" key="19">
    <source>
    </source>
</evidence>
<evidence type="ECO:0000269" key="20">
    <source>
    </source>
</evidence>
<evidence type="ECO:0000269" key="21">
    <source>
    </source>
</evidence>
<evidence type="ECO:0000269" key="22">
    <source>
    </source>
</evidence>
<evidence type="ECO:0000269" key="23">
    <source>
    </source>
</evidence>
<evidence type="ECO:0000269" key="24">
    <source ref="6"/>
</evidence>
<evidence type="ECO:0000303" key="25">
    <source>
    </source>
</evidence>
<evidence type="ECO:0000303" key="26">
    <source ref="3"/>
</evidence>
<evidence type="ECO:0000305" key="27"/>
<evidence type="ECO:0000312" key="28">
    <source>
        <dbReference type="PDB" id="5TSV"/>
    </source>
</evidence>
<evidence type="ECO:0000312" key="29">
    <source>
        <dbReference type="PDB" id="5TSX"/>
    </source>
</evidence>
<evidence type="ECO:0007744" key="30">
    <source>
        <dbReference type="PDB" id="2EBQ"/>
    </source>
</evidence>
<evidence type="ECO:0007744" key="31">
    <source>
        <dbReference type="PDB" id="2EBR"/>
    </source>
</evidence>
<evidence type="ECO:0007744" key="32">
    <source>
        <dbReference type="PDB" id="2EBV"/>
    </source>
</evidence>
<evidence type="ECO:0007744" key="33">
    <source>
    </source>
</evidence>
<evidence type="ECO:0007744" key="34">
    <source>
    </source>
</evidence>
<evidence type="ECO:0007744" key="35">
    <source>
    </source>
</evidence>
<evidence type="ECO:0007744" key="36">
    <source>
    </source>
</evidence>
<evidence type="ECO:0007744" key="37">
    <source>
    </source>
</evidence>
<evidence type="ECO:0007744" key="38">
    <source>
    </source>
</evidence>
<evidence type="ECO:0007744" key="39">
    <source>
    </source>
</evidence>
<evidence type="ECO:0007744" key="40">
    <source>
    </source>
</evidence>
<evidence type="ECO:0007744" key="41">
    <source>
    </source>
</evidence>
<evidence type="ECO:0007744" key="42">
    <source>
    </source>
</evidence>
<evidence type="ECO:0007744" key="43">
    <source>
    </source>
</evidence>
<evidence type="ECO:0007744" key="44">
    <source>
    </source>
</evidence>
<evidence type="ECO:0007744" key="45">
    <source>
    </source>
</evidence>
<evidence type="ECO:0007744" key="46">
    <source>
    </source>
</evidence>
<evidence type="ECO:0007744" key="47">
    <source>
    </source>
</evidence>
<evidence type="ECO:0007744" key="48">
    <source>
    </source>
</evidence>
<evidence type="ECO:0007829" key="49">
    <source>
        <dbReference type="PDB" id="2EBQ"/>
    </source>
</evidence>
<evidence type="ECO:0007829" key="50">
    <source>
        <dbReference type="PDB" id="2EBR"/>
    </source>
</evidence>
<evidence type="ECO:0007829" key="51">
    <source>
        <dbReference type="PDB" id="2EBV"/>
    </source>
</evidence>
<evidence type="ECO:0007829" key="52">
    <source>
        <dbReference type="PDB" id="8CL0"/>
    </source>
</evidence>
<protein>
    <recommendedName>
        <fullName>Nuclear pore complex protein Nup153</fullName>
    </recommendedName>
    <alternativeName>
        <fullName>153 kDa nucleoporin</fullName>
    </alternativeName>
    <alternativeName>
        <fullName>Nucleoporin Nup153</fullName>
    </alternativeName>
</protein>
<keyword id="KW-0002">3D-structure</keyword>
<keyword id="KW-0007">Acetylation</keyword>
<keyword id="KW-0025">Alternative splicing</keyword>
<keyword id="KW-0903">Direct protein sequencing</keyword>
<keyword id="KW-0238">DNA-binding</keyword>
<keyword id="KW-0325">Glycoprotein</keyword>
<keyword id="KW-0945">Host-virus interaction</keyword>
<keyword id="KW-1017">Isopeptide bond</keyword>
<keyword id="KW-0472">Membrane</keyword>
<keyword id="KW-0479">Metal-binding</keyword>
<keyword id="KW-0509">mRNA transport</keyword>
<keyword id="KW-0906">Nuclear pore complex</keyword>
<keyword id="KW-0539">Nucleus</keyword>
<keyword id="KW-0597">Phosphoprotein</keyword>
<keyword id="KW-0653">Protein transport</keyword>
<keyword id="KW-1267">Proteomics identification</keyword>
<keyword id="KW-1185">Reference proteome</keyword>
<keyword id="KW-0677">Repeat</keyword>
<keyword id="KW-0811">Translocation</keyword>
<keyword id="KW-0813">Transport</keyword>
<keyword id="KW-0832">Ubl conjugation</keyword>
<keyword id="KW-1163">Viral penetration into host nucleus</keyword>
<keyword id="KW-1160">Virus entry into host cell</keyword>
<keyword id="KW-0862">Zinc</keyword>
<keyword id="KW-0863">Zinc-finger</keyword>
<reference key="1">
    <citation type="journal article" date="1994" name="Biochim. Biophys. Acta">
        <title>Sequence analysis of a cDNA encoding a human nuclear pore complex protein, hnup153.</title>
        <authorList>
            <person name="McMorrow I."/>
            <person name="Bastos R."/>
            <person name="Horton H."/>
            <person name="Burke B."/>
        </authorList>
    </citation>
    <scope>NUCLEOTIDE SEQUENCE [MRNA] (ISOFORM 1)</scope>
</reference>
<reference key="2">
    <citation type="journal article" date="2004" name="Nat. Genet.">
        <title>Complete sequencing and characterization of 21,243 full-length human cDNAs.</title>
        <authorList>
            <person name="Ota T."/>
            <person name="Suzuki Y."/>
            <person name="Nishikawa T."/>
            <person name="Otsuki T."/>
            <person name="Sugiyama T."/>
            <person name="Irie R."/>
            <person name="Wakamatsu A."/>
            <person name="Hayashi K."/>
            <person name="Sato H."/>
            <person name="Nagai K."/>
            <person name="Kimura K."/>
            <person name="Makita H."/>
            <person name="Sekine M."/>
            <person name="Obayashi M."/>
            <person name="Nishi T."/>
            <person name="Shibahara T."/>
            <person name="Tanaka T."/>
            <person name="Ishii S."/>
            <person name="Yamamoto J."/>
            <person name="Saito K."/>
            <person name="Kawai Y."/>
            <person name="Isono Y."/>
            <person name="Nakamura Y."/>
            <person name="Nagahari K."/>
            <person name="Murakami K."/>
            <person name="Yasuda T."/>
            <person name="Iwayanagi T."/>
            <person name="Wagatsuma M."/>
            <person name="Shiratori A."/>
            <person name="Sudo H."/>
            <person name="Hosoiri T."/>
            <person name="Kaku Y."/>
            <person name="Kodaira H."/>
            <person name="Kondo H."/>
            <person name="Sugawara M."/>
            <person name="Takahashi M."/>
            <person name="Kanda K."/>
            <person name="Yokoi T."/>
            <person name="Furuya T."/>
            <person name="Kikkawa E."/>
            <person name="Omura Y."/>
            <person name="Abe K."/>
            <person name="Kamihara K."/>
            <person name="Katsuta N."/>
            <person name="Sato K."/>
            <person name="Tanikawa M."/>
            <person name="Yamazaki M."/>
            <person name="Ninomiya K."/>
            <person name="Ishibashi T."/>
            <person name="Yamashita H."/>
            <person name="Murakawa K."/>
            <person name="Fujimori K."/>
            <person name="Tanai H."/>
            <person name="Kimata M."/>
            <person name="Watanabe M."/>
            <person name="Hiraoka S."/>
            <person name="Chiba Y."/>
            <person name="Ishida S."/>
            <person name="Ono Y."/>
            <person name="Takiguchi S."/>
            <person name="Watanabe S."/>
            <person name="Yosida M."/>
            <person name="Hotuta T."/>
            <person name="Kusano J."/>
            <person name="Kanehori K."/>
            <person name="Takahashi-Fujii A."/>
            <person name="Hara H."/>
            <person name="Tanase T.-O."/>
            <person name="Nomura Y."/>
            <person name="Togiya S."/>
            <person name="Komai F."/>
            <person name="Hara R."/>
            <person name="Takeuchi K."/>
            <person name="Arita M."/>
            <person name="Imose N."/>
            <person name="Musashino K."/>
            <person name="Yuuki H."/>
            <person name="Oshima A."/>
            <person name="Sasaki N."/>
            <person name="Aotsuka S."/>
            <person name="Yoshikawa Y."/>
            <person name="Matsunawa H."/>
            <person name="Ichihara T."/>
            <person name="Shiohata N."/>
            <person name="Sano S."/>
            <person name="Moriya S."/>
            <person name="Momiyama H."/>
            <person name="Satoh N."/>
            <person name="Takami S."/>
            <person name="Terashima Y."/>
            <person name="Suzuki O."/>
            <person name="Nakagawa S."/>
            <person name="Senoh A."/>
            <person name="Mizoguchi H."/>
            <person name="Goto Y."/>
            <person name="Shimizu F."/>
            <person name="Wakebe H."/>
            <person name="Hishigaki H."/>
            <person name="Watanabe T."/>
            <person name="Sugiyama A."/>
            <person name="Takemoto M."/>
            <person name="Kawakami B."/>
            <person name="Yamazaki M."/>
            <person name="Watanabe K."/>
            <person name="Kumagai A."/>
            <person name="Itakura S."/>
            <person name="Fukuzumi Y."/>
            <person name="Fujimori Y."/>
            <person name="Komiyama M."/>
            <person name="Tashiro H."/>
            <person name="Tanigami A."/>
            <person name="Fujiwara T."/>
            <person name="Ono T."/>
            <person name="Yamada K."/>
            <person name="Fujii Y."/>
            <person name="Ozaki K."/>
            <person name="Hirao M."/>
            <person name="Ohmori Y."/>
            <person name="Kawabata A."/>
            <person name="Hikiji T."/>
            <person name="Kobatake N."/>
            <person name="Inagaki H."/>
            <person name="Ikema Y."/>
            <person name="Okamoto S."/>
            <person name="Okitani R."/>
            <person name="Kawakami T."/>
            <person name="Noguchi S."/>
            <person name="Itoh T."/>
            <person name="Shigeta K."/>
            <person name="Senba T."/>
            <person name="Matsumura K."/>
            <person name="Nakajima Y."/>
            <person name="Mizuno T."/>
            <person name="Morinaga M."/>
            <person name="Sasaki M."/>
            <person name="Togashi T."/>
            <person name="Oyama M."/>
            <person name="Hata H."/>
            <person name="Watanabe M."/>
            <person name="Komatsu T."/>
            <person name="Mizushima-Sugano J."/>
            <person name="Satoh T."/>
            <person name="Shirai Y."/>
            <person name="Takahashi Y."/>
            <person name="Nakagawa K."/>
            <person name="Okumura K."/>
            <person name="Nagase T."/>
            <person name="Nomura N."/>
            <person name="Kikuchi H."/>
            <person name="Masuho Y."/>
            <person name="Yamashita R."/>
            <person name="Nakai K."/>
            <person name="Yada T."/>
            <person name="Nakamura Y."/>
            <person name="Ohara O."/>
            <person name="Isogai T."/>
            <person name="Sugano S."/>
        </authorList>
    </citation>
    <scope>NUCLEOTIDE SEQUENCE [LARGE SCALE MRNA] (ISOFORM 3)</scope>
    <scope>VARIANT THR-827</scope>
    <source>
        <tissue>Hippocampus</tissue>
    </source>
</reference>
<reference key="3">
    <citation type="submission" date="2005-03" db="EMBL/GenBank/DDBJ databases">
        <title>Preparation of a set of expression-ready clones of mammalian long cDNAs encoding large proteins by the ORF trap cloning method.</title>
        <authorList>
            <person name="Nakajima D."/>
            <person name="Saito K."/>
            <person name="Yamakawa H."/>
            <person name="Kikuno R.F."/>
            <person name="Nakayama M."/>
            <person name="Ohara R."/>
            <person name="Okazaki N."/>
            <person name="Koga H."/>
            <person name="Nagase T."/>
            <person name="Ohara O."/>
        </authorList>
    </citation>
    <scope>NUCLEOTIDE SEQUENCE [LARGE SCALE MRNA] (ISOFORM 2)</scope>
    <source>
        <tissue>Myeloma</tissue>
    </source>
</reference>
<reference key="4">
    <citation type="journal article" date="2003" name="Nature">
        <title>The DNA sequence and analysis of human chromosome 6.</title>
        <authorList>
            <person name="Mungall A.J."/>
            <person name="Palmer S.A."/>
            <person name="Sims S.K."/>
            <person name="Edwards C.A."/>
            <person name="Ashurst J.L."/>
            <person name="Wilming L."/>
            <person name="Jones M.C."/>
            <person name="Horton R."/>
            <person name="Hunt S.E."/>
            <person name="Scott C.E."/>
            <person name="Gilbert J.G.R."/>
            <person name="Clamp M.E."/>
            <person name="Bethel G."/>
            <person name="Milne S."/>
            <person name="Ainscough R."/>
            <person name="Almeida J.P."/>
            <person name="Ambrose K.D."/>
            <person name="Andrews T.D."/>
            <person name="Ashwell R.I.S."/>
            <person name="Babbage A.K."/>
            <person name="Bagguley C.L."/>
            <person name="Bailey J."/>
            <person name="Banerjee R."/>
            <person name="Barker D.J."/>
            <person name="Barlow K.F."/>
            <person name="Bates K."/>
            <person name="Beare D.M."/>
            <person name="Beasley H."/>
            <person name="Beasley O."/>
            <person name="Bird C.P."/>
            <person name="Blakey S.E."/>
            <person name="Bray-Allen S."/>
            <person name="Brook J."/>
            <person name="Brown A.J."/>
            <person name="Brown J.Y."/>
            <person name="Burford D.C."/>
            <person name="Burrill W."/>
            <person name="Burton J."/>
            <person name="Carder C."/>
            <person name="Carter N.P."/>
            <person name="Chapman J.C."/>
            <person name="Clark S.Y."/>
            <person name="Clark G."/>
            <person name="Clee C.M."/>
            <person name="Clegg S."/>
            <person name="Cobley V."/>
            <person name="Collier R.E."/>
            <person name="Collins J.E."/>
            <person name="Colman L.K."/>
            <person name="Corby N.R."/>
            <person name="Coville G.J."/>
            <person name="Culley K.M."/>
            <person name="Dhami P."/>
            <person name="Davies J."/>
            <person name="Dunn M."/>
            <person name="Earthrowl M.E."/>
            <person name="Ellington A.E."/>
            <person name="Evans K.A."/>
            <person name="Faulkner L."/>
            <person name="Francis M.D."/>
            <person name="Frankish A."/>
            <person name="Frankland J."/>
            <person name="French L."/>
            <person name="Garner P."/>
            <person name="Garnett J."/>
            <person name="Ghori M.J."/>
            <person name="Gilby L.M."/>
            <person name="Gillson C.J."/>
            <person name="Glithero R.J."/>
            <person name="Grafham D.V."/>
            <person name="Grant M."/>
            <person name="Gribble S."/>
            <person name="Griffiths C."/>
            <person name="Griffiths M.N.D."/>
            <person name="Hall R."/>
            <person name="Halls K.S."/>
            <person name="Hammond S."/>
            <person name="Harley J.L."/>
            <person name="Hart E.A."/>
            <person name="Heath P.D."/>
            <person name="Heathcott R."/>
            <person name="Holmes S.J."/>
            <person name="Howden P.J."/>
            <person name="Howe K.L."/>
            <person name="Howell G.R."/>
            <person name="Huckle E."/>
            <person name="Humphray S.J."/>
            <person name="Humphries M.D."/>
            <person name="Hunt A.R."/>
            <person name="Johnson C.M."/>
            <person name="Joy A.A."/>
            <person name="Kay M."/>
            <person name="Keenan S.J."/>
            <person name="Kimberley A.M."/>
            <person name="King A."/>
            <person name="Laird G.K."/>
            <person name="Langford C."/>
            <person name="Lawlor S."/>
            <person name="Leongamornlert D.A."/>
            <person name="Leversha M."/>
            <person name="Lloyd C.R."/>
            <person name="Lloyd D.M."/>
            <person name="Loveland J.E."/>
            <person name="Lovell J."/>
            <person name="Martin S."/>
            <person name="Mashreghi-Mohammadi M."/>
            <person name="Maslen G.L."/>
            <person name="Matthews L."/>
            <person name="McCann O.T."/>
            <person name="McLaren S.J."/>
            <person name="McLay K."/>
            <person name="McMurray A."/>
            <person name="Moore M.J.F."/>
            <person name="Mullikin J.C."/>
            <person name="Niblett D."/>
            <person name="Nickerson T."/>
            <person name="Novik K.L."/>
            <person name="Oliver K."/>
            <person name="Overton-Larty E.K."/>
            <person name="Parker A."/>
            <person name="Patel R."/>
            <person name="Pearce A.V."/>
            <person name="Peck A.I."/>
            <person name="Phillimore B.J.C.T."/>
            <person name="Phillips S."/>
            <person name="Plumb R.W."/>
            <person name="Porter K.M."/>
            <person name="Ramsey Y."/>
            <person name="Ranby S.A."/>
            <person name="Rice C.M."/>
            <person name="Ross M.T."/>
            <person name="Searle S.M."/>
            <person name="Sehra H.K."/>
            <person name="Sheridan E."/>
            <person name="Skuce C.D."/>
            <person name="Smith S."/>
            <person name="Smith M."/>
            <person name="Spraggon L."/>
            <person name="Squares S.L."/>
            <person name="Steward C.A."/>
            <person name="Sycamore N."/>
            <person name="Tamlyn-Hall G."/>
            <person name="Tester J."/>
            <person name="Theaker A.J."/>
            <person name="Thomas D.W."/>
            <person name="Thorpe A."/>
            <person name="Tracey A."/>
            <person name="Tromans A."/>
            <person name="Tubby B."/>
            <person name="Wall M."/>
            <person name="Wallis J.M."/>
            <person name="West A.P."/>
            <person name="White S.S."/>
            <person name="Whitehead S.L."/>
            <person name="Whittaker H."/>
            <person name="Wild A."/>
            <person name="Willey D.J."/>
            <person name="Wilmer T.E."/>
            <person name="Wood J.M."/>
            <person name="Wray P.W."/>
            <person name="Wyatt J.C."/>
            <person name="Young L."/>
            <person name="Younger R.M."/>
            <person name="Bentley D.R."/>
            <person name="Coulson A."/>
            <person name="Durbin R.M."/>
            <person name="Hubbard T."/>
            <person name="Sulston J.E."/>
            <person name="Dunham I."/>
            <person name="Rogers J."/>
            <person name="Beck S."/>
        </authorList>
    </citation>
    <scope>NUCLEOTIDE SEQUENCE [LARGE SCALE GENOMIC DNA]</scope>
</reference>
<reference key="5">
    <citation type="journal article" date="2004" name="Genome Res.">
        <title>The status, quality, and expansion of the NIH full-length cDNA project: the Mammalian Gene Collection (MGC).</title>
        <authorList>
            <consortium name="The MGC Project Team"/>
        </authorList>
    </citation>
    <scope>NUCLEOTIDE SEQUENCE [LARGE SCALE MRNA] (ISOFORM 1)</scope>
    <scope>VARIANTS ASN-90 AND PHE-381</scope>
    <source>
        <tissue>Testis</tissue>
    </source>
</reference>
<reference key="6">
    <citation type="submission" date="2009-03" db="UniProtKB">
        <authorList>
            <person name="Bienvenut W.V."/>
            <person name="Dozynkiewicz M."/>
            <person name="Norman J.C."/>
        </authorList>
    </citation>
    <scope>PROTEIN SEQUENCE OF 2-17; 251-263; 295-309; 367-379; 706-718 AND 1046-1056</scope>
    <scope>CLEAVAGE OF INITIATOR METHIONINE</scope>
    <scope>ACETYLATION AT ALA-2</scope>
    <scope>IDENTIFICATION BY MASS SPECTROMETRY</scope>
    <source>
        <tissue>Ovarian carcinoma</tissue>
    </source>
</reference>
<reference key="7">
    <citation type="journal article" date="2002" name="J. Cell Biol.">
        <title>Exportin-5, a novel karyopherin, mediates nuclear export of double-stranded RNA binding proteins.</title>
        <authorList>
            <person name="Brownawell A.M."/>
            <person name="Macara I.G."/>
        </authorList>
    </citation>
    <scope>INTERACTION WITH XPO5</scope>
</reference>
<reference key="8">
    <citation type="journal article" date="2002" name="J. Cell Biol.">
        <title>Tpr is localized within the nuclear basket of the pore complex and has a role in nuclear protein export.</title>
        <authorList>
            <person name="Frosst P."/>
            <person name="Guan T."/>
            <person name="Subauste C."/>
            <person name="Hahn K."/>
            <person name="Gerace L."/>
        </authorList>
    </citation>
    <scope>SUBCELLULAR LOCATION</scope>
</reference>
<reference key="9">
    <citation type="journal article" date="2003" name="Mol. Biol. Cell">
        <title>Direct interaction with nup153 mediates binding of Tpr to the periphery of the nuclear pore complex.</title>
        <authorList>
            <person name="Hase M.E."/>
            <person name="Cordes V.C."/>
        </authorList>
    </citation>
    <scope>FUNCTION IN ANCHORING TPR</scope>
    <scope>INTERACTION WITH TPR</scope>
</reference>
<reference key="10">
    <citation type="journal article" date="2004" name="Mol. Biol. Cell">
        <title>Nucleoporins as components of the nuclear pore complex core structure and Tpr as the architectural element of the nuclear basket.</title>
        <authorList>
            <person name="Krull S."/>
            <person name="Thyberg J."/>
            <person name="Bjorkroth B."/>
            <person name="Rackwitz H.R."/>
            <person name="Cordes V.C."/>
        </authorList>
    </citation>
    <scope>FUNCTION</scope>
    <scope>IDENTIFICATION IN THE NUCLEAR PORE COMPLEX</scope>
    <scope>SUBCELLULAR LOCATION</scope>
</reference>
<reference key="11">
    <citation type="journal article" date="2006" name="Cell">
        <title>Global, in vivo, and site-specific phosphorylation dynamics in signaling networks.</title>
        <authorList>
            <person name="Olsen J.V."/>
            <person name="Blagoev B."/>
            <person name="Gnad F."/>
            <person name="Macek B."/>
            <person name="Kumar C."/>
            <person name="Mortensen P."/>
            <person name="Mann M."/>
        </authorList>
    </citation>
    <scope>PHOSPHORYLATION [LARGE SCALE ANALYSIS] AT SER-338 AND THR-588</scope>
    <scope>IDENTIFICATION BY MASS SPECTROMETRY [LARGE SCALE ANALYSIS]</scope>
    <source>
        <tissue>Cervix carcinoma</tissue>
    </source>
</reference>
<reference key="12">
    <citation type="journal article" date="2006" name="Nat. Biotechnol.">
        <title>A probability-based approach for high-throughput protein phosphorylation analysis and site localization.</title>
        <authorList>
            <person name="Beausoleil S.A."/>
            <person name="Villen J."/>
            <person name="Gerber S.A."/>
            <person name="Rush J."/>
            <person name="Gygi S.P."/>
        </authorList>
    </citation>
    <scope>PHOSPHORYLATION [LARGE SCALE ANALYSIS] AT SER-209; SER-338 AND SER-633</scope>
    <scope>IDENTIFICATION BY MASS SPECTROMETRY [LARGE SCALE ANALYSIS]</scope>
    <source>
        <tissue>Cervix carcinoma</tissue>
    </source>
</reference>
<reference key="13">
    <citation type="journal article" date="2008" name="J. Proteome Res.">
        <title>Combining protein-based IMAC, peptide-based IMAC, and MudPIT for efficient phosphoproteomic analysis.</title>
        <authorList>
            <person name="Cantin G.T."/>
            <person name="Yi W."/>
            <person name="Lu B."/>
            <person name="Park S.K."/>
            <person name="Xu T."/>
            <person name="Lee J.-D."/>
            <person name="Yates J.R. III"/>
        </authorList>
    </citation>
    <scope>PHOSPHORYLATION [LARGE SCALE ANALYSIS] AT SER-257 AND SER-338</scope>
    <scope>IDENTIFICATION BY MASS SPECTROMETRY [LARGE SCALE ANALYSIS]</scope>
    <source>
        <tissue>Cervix carcinoma</tissue>
    </source>
</reference>
<reference key="14">
    <citation type="journal article" date="2008" name="Mol. Cell">
        <title>Kinase-selective enrichment enables quantitative phosphoproteomics of the kinome across the cell cycle.</title>
        <authorList>
            <person name="Daub H."/>
            <person name="Olsen J.V."/>
            <person name="Bairlein M."/>
            <person name="Gnad F."/>
            <person name="Oppermann F.S."/>
            <person name="Korner R."/>
            <person name="Greff Z."/>
            <person name="Keri G."/>
            <person name="Stemmann O."/>
            <person name="Mann M."/>
        </authorList>
    </citation>
    <scope>PHOSPHORYLATION [LARGE SCALE ANALYSIS] AT SER-209</scope>
    <scope>IDENTIFICATION BY MASS SPECTROMETRY [LARGE SCALE ANALYSIS]</scope>
    <source>
        <tissue>Cervix carcinoma</tissue>
    </source>
</reference>
<reference key="15">
    <citation type="journal article" date="2008" name="Proc. Natl. Acad. Sci. U.S.A.">
        <title>A quantitative atlas of mitotic phosphorylation.</title>
        <authorList>
            <person name="Dephoure N."/>
            <person name="Zhou C."/>
            <person name="Villen J."/>
            <person name="Beausoleil S.A."/>
            <person name="Bakalarski C.E."/>
            <person name="Elledge S.J."/>
            <person name="Gygi S.P."/>
        </authorList>
    </citation>
    <scope>PHOSPHORYLATION [LARGE SCALE ANALYSIS] AT SER-209; SER-240; SER-257; SER-330; SER-334; SER-338; SER-343; THR-369; SER-522; SER-529; SER-614; SER-619; SER-1457 AND SER-1463</scope>
    <scope>IDENTIFICATION BY MASS SPECTROMETRY [LARGE SCALE ANALYSIS]</scope>
    <source>
        <tissue>Cervix carcinoma</tissue>
    </source>
</reference>
<reference key="16">
    <citation type="journal article" date="2009" name="Anal. Chem.">
        <title>Lys-N and trypsin cover complementary parts of the phosphoproteome in a refined SCX-based approach.</title>
        <authorList>
            <person name="Gauci S."/>
            <person name="Helbig A.O."/>
            <person name="Slijper M."/>
            <person name="Krijgsveld J."/>
            <person name="Heck A.J."/>
            <person name="Mohammed S."/>
        </authorList>
    </citation>
    <scope>ACETYLATION [LARGE SCALE ANALYSIS] AT ALA-2</scope>
    <scope>CLEAVAGE OF INITIATOR METHIONINE [LARGE SCALE ANALYSIS]</scope>
    <scope>IDENTIFICATION BY MASS SPECTROMETRY [LARGE SCALE ANALYSIS]</scope>
</reference>
<reference key="17">
    <citation type="journal article" date="2009" name="J. Virol.">
        <title>Integrase interacts with nucleoporin NUP153 to mediate the nuclear import of human immunodeficiency virus type 1.</title>
        <authorList>
            <person name="Woodward C.L."/>
            <person name="Prakobwanakit S."/>
            <person name="Mosessian S."/>
            <person name="Chow S.A."/>
        </authorList>
    </citation>
    <scope>INTERACTION WITH HIV INTEGRASE (MICROBIAL INFECTION)</scope>
</reference>
<reference key="18">
    <citation type="journal article" date="2009" name="Sci. Signal.">
        <title>Quantitative phosphoproteomic analysis of T cell receptor signaling reveals system-wide modulation of protein-protein interactions.</title>
        <authorList>
            <person name="Mayya V."/>
            <person name="Lundgren D.H."/>
            <person name="Hwang S.-I."/>
            <person name="Rezaul K."/>
            <person name="Wu L."/>
            <person name="Eng J.K."/>
            <person name="Rodionov V."/>
            <person name="Han D.K."/>
        </authorList>
    </citation>
    <scope>PHOSPHORYLATION [LARGE SCALE ANALYSIS] AT SER-334; SER-338; SER-516; SER-522 AND SER-1463</scope>
    <scope>IDENTIFICATION BY MASS SPECTROMETRY [LARGE SCALE ANALYSIS]</scope>
    <source>
        <tissue>Leukemic T-cell</tissue>
    </source>
</reference>
<reference key="19">
    <citation type="journal article" date="2009" name="Science">
        <title>Lysine acetylation targets protein complexes and co-regulates major cellular functions.</title>
        <authorList>
            <person name="Choudhary C."/>
            <person name="Kumar C."/>
            <person name="Gnad F."/>
            <person name="Nielsen M.L."/>
            <person name="Rehman M."/>
            <person name="Walther T.C."/>
            <person name="Olsen J.V."/>
            <person name="Mann M."/>
        </authorList>
    </citation>
    <scope>ACETYLATION [LARGE SCALE ANALYSIS] AT LYS-384; LYS-718 AND LYS-954</scope>
    <scope>IDENTIFICATION BY MASS SPECTROMETRY [LARGE SCALE ANALYSIS]</scope>
</reference>
<reference key="20">
    <citation type="journal article" date="2010" name="Curr. Biol.">
        <title>mRNA export from mammalian cell nuclei is dependent on GANP.</title>
        <authorList>
            <person name="Wickramasinghe V.O."/>
            <person name="McMurtrie P.I."/>
            <person name="Mills A.D."/>
            <person name="Takei Y."/>
            <person name="Penrhyn-Lowe S."/>
            <person name="Amagase Y."/>
            <person name="Main S."/>
            <person name="Marr J."/>
            <person name="Stewart M."/>
            <person name="Laskey R.A."/>
        </authorList>
    </citation>
    <scope>INTERACTION WITH MCM3AP</scope>
</reference>
<reference key="21">
    <citation type="journal article" date="2010" name="EMBO J.">
        <title>Protein Tpr is required for establishing nuclear pore-associated zones of heterochromatin exclusion.</title>
        <authorList>
            <person name="Krull S."/>
            <person name="Dorries J."/>
            <person name="Boysen B."/>
            <person name="Reidenbach S."/>
            <person name="Magnius L."/>
            <person name="Norder H."/>
            <person name="Thyberg J."/>
            <person name="Cordes V.C."/>
        </authorList>
    </citation>
    <scope>SUBCELLULAR LOCATION</scope>
    <scope>PROTEOLYTIC PROCESSING</scope>
</reference>
<reference key="22">
    <citation type="journal article" date="2010" name="J. Biol. Chem.">
        <title>Nucleoporin translocated promoter region (Tpr) associates with dynein complex, preventing chromosome lagging formation during mitosis.</title>
        <authorList>
            <person name="Nakano H."/>
            <person name="Funasaka T."/>
            <person name="Hashizume C."/>
            <person name="Wong R.W."/>
        </authorList>
    </citation>
    <scope>INTERACTION WITH TPR</scope>
</reference>
<reference key="23">
    <citation type="journal article" date="2010" name="PLoS Pathog.">
        <title>Nucleoporin 153 arrests the nuclear import of hepatitis B virus capsids in the nuclear basket.</title>
        <authorList>
            <person name="Schmitz A."/>
            <person name="Schwarz A."/>
            <person name="Foss M."/>
            <person name="Zhou L."/>
            <person name="Rabe B."/>
            <person name="Hoellenriegel J."/>
            <person name="Stoeber M."/>
            <person name="Pante N."/>
            <person name="Kann M."/>
        </authorList>
    </citation>
    <scope>INTERACTION WITH HEPATITIS B VIRUS CAPSID PROTEIN (MICROBIAL INFECTION)</scope>
</reference>
<reference key="24">
    <citation type="journal article" date="2010" name="Sci. Signal.">
        <title>Extensive crosstalk between O-GlcNAcylation and phosphorylation regulates cytokinesis.</title>
        <authorList>
            <person name="Wang Z."/>
            <person name="Udeshi N.D."/>
            <person name="Slawson C."/>
            <person name="Compton P.D."/>
            <person name="Sakabe K."/>
            <person name="Cheung W.D."/>
            <person name="Shabanowitz J."/>
            <person name="Hunt D.F."/>
            <person name="Hart G.W."/>
        </authorList>
    </citation>
    <scope>GLYCOSYLATION AT SER-534; SER-544; SER-908; SER-909; SER-1113 AND THR-1156</scope>
</reference>
<reference key="25">
    <citation type="journal article" date="2010" name="Sci. Signal.">
        <title>Quantitative phosphoproteomics reveals widespread full phosphorylation site occupancy during mitosis.</title>
        <authorList>
            <person name="Olsen J.V."/>
            <person name="Vermeulen M."/>
            <person name="Santamaria A."/>
            <person name="Kumar C."/>
            <person name="Miller M.L."/>
            <person name="Jensen L.J."/>
            <person name="Gnad F."/>
            <person name="Cox J."/>
            <person name="Jensen T.S."/>
            <person name="Nigg E.A."/>
            <person name="Brunak S."/>
            <person name="Mann M."/>
        </authorList>
    </citation>
    <scope>PHOSPHORYLATION [LARGE SCALE ANALYSIS] AT SER-192; SER-209; SER-240; SER-338; SER-500; SER-614; SER-619; SER-633; SER-687 AND SER-1463</scope>
    <scope>IDENTIFICATION BY MASS SPECTROMETRY [LARGE SCALE ANALYSIS]</scope>
    <source>
        <tissue>Cervix carcinoma</tissue>
    </source>
</reference>
<reference key="26">
    <citation type="journal article" date="2011" name="BMC Syst. Biol.">
        <title>Initial characterization of the human central proteome.</title>
        <authorList>
            <person name="Burkard T.R."/>
            <person name="Planyavsky M."/>
            <person name="Kaupe I."/>
            <person name="Breitwieser F.P."/>
            <person name="Buerckstuemmer T."/>
            <person name="Bennett K.L."/>
            <person name="Superti-Furga G."/>
            <person name="Colinge J."/>
        </authorList>
    </citation>
    <scope>IDENTIFICATION BY MASS SPECTROMETRY [LARGE SCALE ANALYSIS]</scope>
</reference>
<reference key="27">
    <citation type="journal article" date="2011" name="Sci. Signal.">
        <title>System-wide temporal characterization of the proteome and phosphoproteome of human embryonic stem cell differentiation.</title>
        <authorList>
            <person name="Rigbolt K.T."/>
            <person name="Prokhorova T.A."/>
            <person name="Akimov V."/>
            <person name="Henningsen J."/>
            <person name="Johansen P.T."/>
            <person name="Kratchmarova I."/>
            <person name="Kassem M."/>
            <person name="Mann M."/>
            <person name="Olsen J.V."/>
            <person name="Blagoev B."/>
        </authorList>
    </citation>
    <scope>PHOSPHORYLATION [LARGE SCALE ANALYSIS] AT SER-192; SER-209 AND SER-687</scope>
    <scope>IDENTIFICATION BY MASS SPECTROMETRY [LARGE SCALE ANALYSIS]</scope>
</reference>
<reference key="28">
    <citation type="journal article" date="2012" name="Cell">
        <title>Hikeshi, a nuclear import carrier for hsp70s, protects cells from heat shock-induced nuclear damage.</title>
        <authorList>
            <person name="Kose S."/>
            <person name="Furuta M."/>
            <person name="Imamoto N."/>
        </authorList>
    </citation>
    <scope>INTERACTION WITH HIKESHI</scope>
</reference>
<reference key="29">
    <citation type="journal article" date="2012" name="J. Virol.">
        <title>Epstein-Barr virus protein kinase BGLF4 targets the nucleus through interaction with nucleoporins.</title>
        <authorList>
            <person name="Chang C.W."/>
            <person name="Lee C.P."/>
            <person name="Huang Y.H."/>
            <person name="Yang P.W."/>
            <person name="Wang J.T."/>
            <person name="Chen M.R."/>
        </authorList>
    </citation>
    <scope>INTERACTION WITH EPSTEIN-BARR VIRUS BGLF4 (MICROBIAL INFECTION)</scope>
</reference>
<reference key="30">
    <citation type="journal article" date="2012" name="PLoS ONE">
        <title>Localization of nucleoporin Tpr to the nuclear pore complex is essential for Tpr mediated regulation of the export of unspliced RNA.</title>
        <authorList>
            <person name="Rajanala K."/>
            <person name="Nandicoori V.K."/>
        </authorList>
    </citation>
    <scope>FUNCTION IN RNA EXPORT</scope>
    <scope>INTERACTION WITH MAPK1</scope>
    <scope>SUBCELLULAR LOCATION</scope>
</reference>
<reference key="31">
    <citation type="journal article" date="2012" name="Proc. Natl. Acad. Sci. U.S.A.">
        <title>N-terminal acetylome analyses and functional insights of the N-terminal acetyltransferase NatB.</title>
        <authorList>
            <person name="Van Damme P."/>
            <person name="Lasa M."/>
            <person name="Polevoda B."/>
            <person name="Gazquez C."/>
            <person name="Elosegui-Artola A."/>
            <person name="Kim D.S."/>
            <person name="De Juan-Pardo E."/>
            <person name="Demeyer K."/>
            <person name="Hole K."/>
            <person name="Larrea E."/>
            <person name="Timmerman E."/>
            <person name="Prieto J."/>
            <person name="Arnesen T."/>
            <person name="Sherman F."/>
            <person name="Gevaert K."/>
            <person name="Aldabe R."/>
        </authorList>
    </citation>
    <scope>ACETYLATION [LARGE SCALE ANALYSIS] AT ALA-2</scope>
    <scope>CLEAVAGE OF INITIATOR METHIONINE [LARGE SCALE ANALYSIS]</scope>
    <scope>IDENTIFICATION BY MASS SPECTROMETRY [LARGE SCALE ANALYSIS]</scope>
</reference>
<reference key="32">
    <citation type="journal article" date="2013" name="J. Proteome Res.">
        <title>Toward a comprehensive characterization of a human cancer cell phosphoproteome.</title>
        <authorList>
            <person name="Zhou H."/>
            <person name="Di Palma S."/>
            <person name="Preisinger C."/>
            <person name="Peng M."/>
            <person name="Polat A.N."/>
            <person name="Heck A.J."/>
            <person name="Mohammed S."/>
        </authorList>
    </citation>
    <scope>PHOSPHORYLATION [LARGE SCALE ANALYSIS] AT SER-182; SER-185; SER-203; SER-209; SER-240; SER-257; SER-297; SER-320; SER-330; SER-334; SER-338; SER-343; THR-369; THR-388; SER-516; SER-522; SER-607; SER-614; SER-619; SER-687; SER-891; SER-1461 AND SER-1463</scope>
    <scope>IDENTIFICATION BY MASS SPECTROMETRY [LARGE SCALE ANALYSIS]</scope>
    <source>
        <tissue>Cervix carcinoma</tissue>
        <tissue>Erythroleukemia</tissue>
    </source>
</reference>
<reference key="33">
    <citation type="journal article" date="2013" name="Nat. Commun.">
        <title>GANP regulates recruitment of AID to immunoglobulin variable regions by modulating transcription and nucleosome occupancy.</title>
        <authorList>
            <person name="Singh S.K."/>
            <person name="Maeda K."/>
            <person name="Eid M.M."/>
            <person name="Almofty S.A."/>
            <person name="Ono M."/>
            <person name="Pham P."/>
            <person name="Goodman M.F."/>
            <person name="Sakaguchi N."/>
        </authorList>
    </citation>
    <scope>INTERACTION WITH MCM3AP</scope>
</reference>
<reference key="34">
    <citation type="journal article" date="2013" name="PLoS Pathog.">
        <title>Nucleoporin NUP153 phenylalanine-glycine motifs engage a common binding pocket within the HIV-1 capsid protein to mediate lentiviral infectivity.</title>
        <authorList>
            <person name="Matreyek K.A."/>
            <person name="Yucel S.S."/>
            <person name="Li X."/>
            <person name="Engelman A."/>
        </authorList>
    </citation>
    <scope>FUNCTION (MICROBIAL INFECTION)</scope>
    <scope>INTERACTION WITH HIV-1 CAPSID PROTEIN P24</scope>
    <scope>DOMAIN (MICROBIAL INFECTION)</scope>
    <scope>REGION (MICROBIAL INFECTION)</scope>
    <scope>MUTAGENESIS OF PHE-1415</scope>
</reference>
<reference key="35">
    <citation type="journal article" date="2013" name="Virology">
        <title>Nup153 and Nup98 bind the HIV-1 core and contribute to the early steps of HIV-1 replication.</title>
        <authorList>
            <person name="Di Nunzio F."/>
            <person name="Fricke T."/>
            <person name="Miccio A."/>
            <person name="Valle-Casuso J.C."/>
            <person name="Perez P."/>
            <person name="Souque P."/>
            <person name="Rizzi E."/>
            <person name="Severgnini M."/>
            <person name="Mavilio F."/>
            <person name="Charneau P."/>
            <person name="Diaz-Griffero F."/>
        </authorList>
    </citation>
    <scope>FUNCTION (MICROBIAL INFECTION)</scope>
    <scope>INTERACTION WITH HIV-1 CAPSID PROTEIN P24</scope>
</reference>
<reference key="36">
    <citation type="journal article" date="2014" name="J. Proteomics">
        <title>An enzyme assisted RP-RPLC approach for in-depth analysis of human liver phosphoproteome.</title>
        <authorList>
            <person name="Bian Y."/>
            <person name="Song C."/>
            <person name="Cheng K."/>
            <person name="Dong M."/>
            <person name="Wang F."/>
            <person name="Huang J."/>
            <person name="Sun D."/>
            <person name="Wang L."/>
            <person name="Ye M."/>
            <person name="Zou H."/>
        </authorList>
    </citation>
    <scope>PHOSPHORYLATION [LARGE SCALE ANALYSIS] AT THR-102; SER-192; SER-333; SER-338 AND SER-518</scope>
    <scope>IDENTIFICATION BY MASS SPECTROMETRY [LARGE SCALE ANALYSIS]</scope>
    <source>
        <tissue>Liver</tissue>
    </source>
</reference>
<reference key="37">
    <citation type="journal article" date="2014" name="Nat. Struct. Mol. Biol.">
        <title>Uncovering global SUMOylation signaling networks in a site-specific manner.</title>
        <authorList>
            <person name="Hendriks I.A."/>
            <person name="D'Souza R.C."/>
            <person name="Yang B."/>
            <person name="Verlaan-de Vries M."/>
            <person name="Mann M."/>
            <person name="Vertegaal A.C."/>
        </authorList>
    </citation>
    <scope>SUMOYLATION [LARGE SCALE ANALYSIS] AT LYS-353</scope>
    <scope>IDENTIFICATION BY MASS SPECTROMETRY [LARGE SCALE ANALYSIS]</scope>
</reference>
<reference key="38">
    <citation type="journal article" date="2014" name="Proc. Natl. Acad. Sci. U.S.A.">
        <title>Mapping of SUMO sites and analysis of SUMOylation changes induced by external stimuli.</title>
        <authorList>
            <person name="Impens F."/>
            <person name="Radoshevich L."/>
            <person name="Cossart P."/>
            <person name="Ribet D."/>
        </authorList>
    </citation>
    <scope>SUMOYLATION [LARGE SCALE ANALYSIS] AT LYS-353</scope>
    <scope>IDENTIFICATION BY MASS SPECTROMETRY [LARGE SCALE ANALYSIS]</scope>
</reference>
<reference key="39">
    <citation type="journal article" date="2017" name="Nat. Struct. Mol. Biol.">
        <title>Site-specific mapping of the human SUMO proteome reveals co-modification with phosphorylation.</title>
        <authorList>
            <person name="Hendriks I.A."/>
            <person name="Lyon D."/>
            <person name="Young C."/>
            <person name="Jensen L.J."/>
            <person name="Vertegaal A.C."/>
            <person name="Nielsen M.L."/>
        </authorList>
    </citation>
    <scope>SUMOYLATION [LARGE SCALE ANALYSIS] AT LYS-353</scope>
    <scope>IDENTIFICATION BY MASS SPECTROMETRY [LARGE SCALE ANALYSIS]</scope>
</reference>
<reference key="40">
    <citation type="journal article" date="2020" name="Mol. Biol. Cell">
        <title>Viral protein X unlocks the nuclear pore complex through a human Nup153-dependent pathway to promote nuclear translocation of the lentiviral genome.</title>
        <authorList>
            <person name="Singh S.P."/>
            <person name="Raja S."/>
            <person name="Mahalingam S."/>
        </authorList>
    </citation>
    <scope>FUNCTION (MICROBIAL INFECTION)</scope>
    <scope>INTERACTION WITH HIV-2 VPX</scope>
</reference>
<reference key="41">
    <citation type="submission" date="2007-08" db="PDB data bank">
        <title>Solution structure of the second, third and fourth ZF-RanBP domains from human nuclear pore complex protein NUP153.</title>
        <authorList>
            <consortium name="RIKEN structural genomics initiative (RSGI)"/>
        </authorList>
    </citation>
    <scope>STRUCTURE BY NMR OF 722-761 IN COMPLEX WITH ZINC</scope>
    <scope>STRUCTURE BY NMR OF 773-822 IN COMPLEX WITH ZINC</scope>
    <scope>STRUCTURE BY NMR OF 851-890 IN COMPLEX WITH ZINC</scope>
</reference>
<reference evidence="28 29" key="42">
    <citation type="journal article" date="2018" name="J. Virol.">
        <title>Nup153 Unlocks the Nuclear Pore Complex for HIV-1 Nuclear Translocation in Nondividing Cells.</title>
        <authorList>
            <person name="Buffone C."/>
            <person name="Martinez-Lopez A."/>
            <person name="Fricke T."/>
            <person name="Opp S."/>
            <person name="Severgnini M."/>
            <person name="Cifola I."/>
            <person name="Petiti L."/>
            <person name="Frabetti S."/>
            <person name="Skorupka K."/>
            <person name="Zadrozny K.K."/>
            <person name="Ganser-Pornillos B.K."/>
            <person name="Pornillos O."/>
            <person name="Di Nunzio F."/>
            <person name="Diaz-Griffero F."/>
        </authorList>
    </citation>
    <scope>X-RAY CRYSTALLOGRAPHY (1.90 ANGSTROMS) OF 1407-1429</scope>
    <scope>FUNCTION (MICROBIAL INFECTION)</scope>
    <scope>INTERACTION WITH HIV-1 CAPSID PROTEIN P24</scope>
    <scope>DOMAIN (MICROBIAL INFECTION)</scope>
</reference>
<reference key="43">
    <citation type="journal article" date="2024" name="Clin. Genet.">
        <title>Spermatozoa in mice lacking the nucleoporin NUP210L show defects in head shape and motility but not in nuclear compaction or histone replacement.</title>
        <authorList>
            <person name="Al Dala Ali M."/>
            <person name="Longepied G."/>
            <person name="Nicolet A."/>
            <person name="Metzler-Guillemain C."/>
            <person name="Mitchell M.J."/>
        </authorList>
    </citation>
    <scope>VARIANT LEU-485</scope>
    <scope>SUBCELLULAR LOCATION</scope>
</reference>
<sequence>MASGAGGVGGGGGGKIRTRRCHQGPIKPYQQGRQQHQGILSRVTESVKNIVPGWLQRYFNKNEDVCSCSTDTSEVPRWPENKEDHLVYADEESSNITDGRITPEPAVSNTEEPSTTSTASNYPDVLTRPSLHRSHLNFSMLESPALHCQPSTSSAFPIGSSGFSLVKEIKDSTSQHDDDNISTTSGFSSRASDKDITVSKNTSLPPLWSPEAERSHSLSQHTATSSKKPAFNLSAFGTLSPSLGNSSILKTSQLGDSPFYPGKTTYGGAAAAVRQSKLRNTPYQAPVRRQMKAKQLSAQSYGVTSSTARRILQSLEKMSSPLADAKRIPSIVSSPLNSPLDRSGIDITDFQAKREKVDSQYPPVQRLMTPKPVSIATNRSVYFKPSLTPSGEFRKTNQRIDNKCSTGYEKNMTPGQNREQRESGFSYPNFSLPAANGLSSGVGGGGGKMRRERTRFVASKPLEEEEMEVPVLPKISLPITSSSLPTFNFSSPEITTSSPSPINSSQALTNKVQMTSPSSTGSPMFKFSSPIVKSTEANVLPPSSIGFTFSVPVAKTAELSGSSSTLEPIISSSAHHVTTVNSTNCKKTPPEDCEGPFRPAEILKEGSVLDILKSPGFASPKIDSVAAQPTATSPVVYTRPAISSFSSSGIGFGESLKAGSSWQCDTCLLQNKVTDNKCIACQAAKLSPRDTAKQTGIETPNKSGKTTLSASGTGFGDKFKPVIGTWDCDTCLVQNKPEAIKCVACETPKPGTCVKRALTLTVVSESAETMTASSSSCTVTTGTLGFGDKFKRPIGSWECSVCCVSNNAEDNKCVSCMSEKPGSSVPASSSSTVPVSLPSGGSLGLEKFKKPEGSWDCELCLVQNKADSTKCLACESAKPGTKSGFKGFDTSSSSSNSAASSSFKFGVSSSSSGPSQTLTSTGNFKFGDQGGFKIGVSSDSGSINPMSEGFKFSKPIGDFKFGVSSESKPEEVKKDSKNDNFKFGLSSGLSNPVSLTPFQFGVSNLGQEEKKEELPKSSSAGFSFGTGVINSTPAPANTIVTSENKSSFNLGTIETKSASVAPFTCKTSEAKKEEMPATKGGFSFGNVEPASLPSASVFVLGRTEEKQQEPVTSTSLVFGKKADNEEPKCQPVFSFGNSEQTKDENSSKSTFSFSMTKPSEKESEQPAKATFAFGAQTSTTADQGAAKPVFSFLNNSSSSSSTPATSAGGGIFGSSTSSSNPPVATFVFGQSSNPVSSSAFGNTAESSTSQSLLFSQDSKLATTSSTGTAVTPFVFGPGASSNNTTTSGFGFGATTTSSSAGSSFVFGTGPSAPSASPAFGANQTPTFGQSQGASQPNPPGFGSISSSTALFPTGSQPAPPTFGTVSSSSQPPVFGQQPSQSAFGSGTTPNSSSAFQFGSSTTNFNFTNNSPSGVFTFGANSSTPAASAQPSGSGGFPFNQSPAAFTVGSNGKNVFSSSGTSFSGRKIKTAVRRRK</sequence>
<feature type="initiator methionine" description="Removed" evidence="24 38 43">
    <location>
        <position position="1"/>
    </location>
</feature>
<feature type="chain" id="PRO_0000204842" description="Nuclear pore complex protein Nup153">
    <location>
        <begin position="2"/>
        <end position="1475"/>
    </location>
</feature>
<feature type="repeat" description="1" evidence="27">
    <location>
        <begin position="236"/>
        <end position="237"/>
    </location>
</feature>
<feature type="repeat" description="2" evidence="27">
    <location>
        <begin position="652"/>
        <end position="653"/>
    </location>
</feature>
<feature type="repeat" description="3" evidence="27">
    <location>
        <begin position="715"/>
        <end position="716"/>
    </location>
</feature>
<feature type="repeat" description="4" evidence="27">
    <location>
        <begin position="786"/>
        <end position="787"/>
    </location>
</feature>
<feature type="repeat" description="5" evidence="27">
    <location>
        <begin position="905"/>
        <end position="906"/>
    </location>
</feature>
<feature type="repeat" description="6" evidence="27">
    <location>
        <begin position="926"/>
        <end position="927"/>
    </location>
</feature>
<feature type="repeat" description="7" evidence="27">
    <location>
        <begin position="961"/>
        <end position="962"/>
    </location>
</feature>
<feature type="repeat" description="8" evidence="27">
    <location>
        <begin position="983"/>
        <end position="984"/>
    </location>
</feature>
<feature type="repeat" description="9" evidence="27">
    <location>
        <begin position="1000"/>
        <end position="1001"/>
    </location>
</feature>
<feature type="repeat" description="10" evidence="27">
    <location>
        <begin position="1024"/>
        <end position="1025"/>
    </location>
</feature>
<feature type="repeat" description="11" evidence="27">
    <location>
        <begin position="1084"/>
        <end position="1085"/>
    </location>
</feature>
<feature type="repeat" description="12" evidence="27">
    <location>
        <begin position="1118"/>
        <end position="1119"/>
    </location>
</feature>
<feature type="repeat" description="13" evidence="27">
    <location>
        <begin position="1135"/>
        <end position="1136"/>
    </location>
</feature>
<feature type="repeat" description="14" evidence="27">
    <location>
        <begin position="1173"/>
        <end position="1174"/>
    </location>
</feature>
<feature type="repeat" description="15" evidence="27">
    <location>
        <begin position="1212"/>
        <end position="1213"/>
    </location>
</feature>
<feature type="repeat" description="16" evidence="27">
    <location>
        <begin position="1228"/>
        <end position="1229"/>
    </location>
</feature>
<feature type="repeat" description="17" evidence="27">
    <location>
        <begin position="1240"/>
        <end position="1241"/>
    </location>
</feature>
<feature type="repeat" description="18" evidence="27">
    <location>
        <begin position="1275"/>
        <end position="1276"/>
    </location>
</feature>
<feature type="repeat" description="19" evidence="27">
    <location>
        <begin position="1289"/>
        <end position="1290"/>
    </location>
</feature>
<feature type="repeat" description="20" evidence="27">
    <location>
        <begin position="1291"/>
        <end position="1292"/>
    </location>
</feature>
<feature type="repeat" description="21" evidence="27">
    <location>
        <begin position="1306"/>
        <end position="1307"/>
    </location>
</feature>
<feature type="repeat" description="22" evidence="27">
    <location>
        <begin position="1319"/>
        <end position="1320"/>
    </location>
</feature>
<feature type="repeat" description="23" evidence="27">
    <location>
        <begin position="1327"/>
        <end position="1328"/>
    </location>
</feature>
<feature type="repeat" description="24" evidence="27">
    <location>
        <begin position="1341"/>
        <end position="1342"/>
    </location>
</feature>
<feature type="repeat" description="25" evidence="27">
    <location>
        <begin position="1362"/>
        <end position="1363"/>
    </location>
</feature>
<feature type="repeat" description="26" evidence="27">
    <location>
        <begin position="1374"/>
        <end position="1375"/>
    </location>
</feature>
<feature type="repeat" description="27" evidence="27">
    <location>
        <begin position="1383"/>
        <end position="1384"/>
    </location>
</feature>
<feature type="repeat" description="28" evidence="27">
    <location>
        <begin position="1397"/>
        <end position="1398"/>
    </location>
</feature>
<feature type="repeat" description="29" evidence="27">
    <location>
        <begin position="1417"/>
        <end position="1418"/>
    </location>
</feature>
<feature type="zinc finger region" description="RanBP2-type 1" evidence="3">
    <location>
        <begin position="657"/>
        <end position="687"/>
    </location>
</feature>
<feature type="zinc finger region" description="RanBP2-type 2" evidence="3">
    <location>
        <begin position="722"/>
        <end position="751"/>
    </location>
</feature>
<feature type="zinc finger region" description="RanBP2-type 3" evidence="3">
    <location>
        <begin position="793"/>
        <end position="822"/>
    </location>
</feature>
<feature type="zinc finger region" description="RanBP2-type 4" evidence="3">
    <location>
        <begin position="851"/>
        <end position="880"/>
    </location>
</feature>
<feature type="region of interest" description="Disordered" evidence="4">
    <location>
        <begin position="1"/>
        <end position="37"/>
    </location>
</feature>
<feature type="region of interest" description="Disordered" evidence="4">
    <location>
        <begin position="90"/>
        <end position="124"/>
    </location>
</feature>
<feature type="region of interest" description="Disordered" evidence="4">
    <location>
        <begin position="171"/>
        <end position="225"/>
    </location>
</feature>
<feature type="region of interest" description="29 X 2 AA repeats of F-G" evidence="27">
    <location>
        <begin position="236"/>
        <end position="1418"/>
    </location>
</feature>
<feature type="region of interest" description="Disordered" evidence="4">
    <location>
        <begin position="1128"/>
        <end position="1167"/>
    </location>
</feature>
<feature type="region of interest" description="Disordered" evidence="4">
    <location>
        <begin position="1311"/>
        <end position="1402"/>
    </location>
</feature>
<feature type="region of interest" description="(Microbial infection) Interacts with HIV-1 capsid protein p24 (CA)" evidence="20">
    <location>
        <begin position="1350"/>
        <end position="1475"/>
    </location>
</feature>
<feature type="region of interest" description="Disordered" evidence="4">
    <location>
        <begin position="1420"/>
        <end position="1475"/>
    </location>
</feature>
<feature type="compositionally biased region" description="Gly residues" evidence="4">
    <location>
        <begin position="1"/>
        <end position="15"/>
    </location>
</feature>
<feature type="compositionally biased region" description="Polar residues" evidence="4">
    <location>
        <begin position="107"/>
        <end position="121"/>
    </location>
</feature>
<feature type="compositionally biased region" description="Polar residues" evidence="4">
    <location>
        <begin position="181"/>
        <end position="190"/>
    </location>
</feature>
<feature type="compositionally biased region" description="Low complexity" evidence="4">
    <location>
        <begin position="1147"/>
        <end position="1157"/>
    </location>
</feature>
<feature type="compositionally biased region" description="Polar residues" evidence="4">
    <location>
        <begin position="1321"/>
        <end position="1335"/>
    </location>
</feature>
<feature type="compositionally biased region" description="Polar residues" evidence="4">
    <location>
        <begin position="1343"/>
        <end position="1356"/>
    </location>
</feature>
<feature type="compositionally biased region" description="Polar residues" evidence="4">
    <location>
        <begin position="1363"/>
        <end position="1396"/>
    </location>
</feature>
<feature type="compositionally biased region" description="Polar residues" evidence="4">
    <location>
        <begin position="1420"/>
        <end position="1431"/>
    </location>
</feature>
<feature type="compositionally biased region" description="Polar residues" evidence="4">
    <location>
        <begin position="1438"/>
        <end position="1463"/>
    </location>
</feature>
<feature type="compositionally biased region" description="Basic residues" evidence="4">
    <location>
        <begin position="1465"/>
        <end position="1475"/>
    </location>
</feature>
<feature type="binding site" evidence="2">
    <location>
        <position position="664"/>
    </location>
    <ligand>
        <name>Zn(2+)</name>
        <dbReference type="ChEBI" id="CHEBI:29105"/>
        <label>1</label>
    </ligand>
</feature>
<feature type="binding site" evidence="2">
    <location>
        <position position="667"/>
    </location>
    <ligand>
        <name>Zn(2+)</name>
        <dbReference type="ChEBI" id="CHEBI:29105"/>
        <label>1</label>
    </ligand>
</feature>
<feature type="binding site" evidence="2">
    <location>
        <position position="678"/>
    </location>
    <ligand>
        <name>Zn(2+)</name>
        <dbReference type="ChEBI" id="CHEBI:29105"/>
        <label>1</label>
    </ligand>
</feature>
<feature type="binding site" evidence="2">
    <location>
        <position position="681"/>
    </location>
    <ligand>
        <name>Zn(2+)</name>
        <dbReference type="ChEBI" id="CHEBI:29105"/>
        <label>1</label>
    </ligand>
</feature>
<feature type="binding site" evidence="30">
    <location>
        <position position="728"/>
    </location>
    <ligand>
        <name>Zn(2+)</name>
        <dbReference type="ChEBI" id="CHEBI:29105"/>
        <label>2</label>
    </ligand>
</feature>
<feature type="binding site" evidence="30">
    <location>
        <position position="731"/>
    </location>
    <ligand>
        <name>Zn(2+)</name>
        <dbReference type="ChEBI" id="CHEBI:29105"/>
        <label>2</label>
    </ligand>
</feature>
<feature type="binding site" evidence="30">
    <location>
        <position position="742"/>
    </location>
    <ligand>
        <name>Zn(2+)</name>
        <dbReference type="ChEBI" id="CHEBI:29105"/>
        <label>2</label>
    </ligand>
</feature>
<feature type="binding site" evidence="30">
    <location>
        <position position="745"/>
    </location>
    <ligand>
        <name>Zn(2+)</name>
        <dbReference type="ChEBI" id="CHEBI:29105"/>
        <label>2</label>
    </ligand>
</feature>
<feature type="binding site" evidence="32">
    <location>
        <position position="799"/>
    </location>
    <ligand>
        <name>Zn(2+)</name>
        <dbReference type="ChEBI" id="CHEBI:29105"/>
        <label>3</label>
    </ligand>
</feature>
<feature type="binding site" evidence="32">
    <location>
        <position position="802"/>
    </location>
    <ligand>
        <name>Zn(2+)</name>
        <dbReference type="ChEBI" id="CHEBI:29105"/>
        <label>3</label>
    </ligand>
</feature>
<feature type="binding site" evidence="32">
    <location>
        <position position="813"/>
    </location>
    <ligand>
        <name>Zn(2+)</name>
        <dbReference type="ChEBI" id="CHEBI:29105"/>
        <label>3</label>
    </ligand>
</feature>
<feature type="binding site" evidence="32">
    <location>
        <position position="816"/>
    </location>
    <ligand>
        <name>Zn(2+)</name>
        <dbReference type="ChEBI" id="CHEBI:29105"/>
        <label>3</label>
    </ligand>
</feature>
<feature type="binding site" evidence="31">
    <location>
        <position position="857"/>
    </location>
    <ligand>
        <name>Zn(2+)</name>
        <dbReference type="ChEBI" id="CHEBI:29105"/>
        <label>4</label>
    </ligand>
</feature>
<feature type="binding site" evidence="31">
    <location>
        <position position="860"/>
    </location>
    <ligand>
        <name>Zn(2+)</name>
        <dbReference type="ChEBI" id="CHEBI:29105"/>
        <label>4</label>
    </ligand>
</feature>
<feature type="binding site" evidence="31">
    <location>
        <position position="871"/>
    </location>
    <ligand>
        <name>Zn(2+)</name>
        <dbReference type="ChEBI" id="CHEBI:29105"/>
        <label>4</label>
    </ligand>
</feature>
<feature type="binding site" evidence="31">
    <location>
        <position position="874"/>
    </location>
    <ligand>
        <name>Zn(2+)</name>
        <dbReference type="ChEBI" id="CHEBI:29105"/>
        <label>4</label>
    </ligand>
</feature>
<feature type="modified residue" description="N-acetylalanine" evidence="24 38 43">
    <location>
        <position position="2"/>
    </location>
</feature>
<feature type="modified residue" description="Phosphothreonine" evidence="45">
    <location>
        <position position="102"/>
    </location>
</feature>
<feature type="modified residue" description="Phosphoserine" evidence="44">
    <location>
        <position position="182"/>
    </location>
</feature>
<feature type="modified residue" description="Phosphoserine" evidence="44">
    <location>
        <position position="185"/>
    </location>
</feature>
<feature type="modified residue" description="Phosphoserine" evidence="41 42 45">
    <location>
        <position position="192"/>
    </location>
</feature>
<feature type="modified residue" description="Phosphoserine" evidence="44">
    <location>
        <position position="203"/>
    </location>
</feature>
<feature type="modified residue" description="Phosphoserine" evidence="33 36 37 41 42 44">
    <location>
        <position position="209"/>
    </location>
</feature>
<feature type="modified residue" description="Phosphoserine" evidence="36 41 44">
    <location>
        <position position="240"/>
    </location>
</feature>
<feature type="modified residue" description="Phosphoserine" evidence="35 36 44">
    <location>
        <position position="257"/>
    </location>
</feature>
<feature type="modified residue" description="Phosphoserine" evidence="44">
    <location>
        <position position="297"/>
    </location>
</feature>
<feature type="modified residue" description="Phosphoserine" evidence="44">
    <location>
        <position position="320"/>
    </location>
</feature>
<feature type="modified residue" description="Phosphoserine" evidence="36 44">
    <location>
        <position position="330"/>
    </location>
</feature>
<feature type="modified residue" description="Phosphoserine" evidence="45">
    <location>
        <position position="333"/>
    </location>
</feature>
<feature type="modified residue" description="Phosphoserine" evidence="36 40 44">
    <location>
        <position position="334"/>
    </location>
</feature>
<feature type="modified residue" description="Phosphoserine" evidence="33 34 35 36 40 41 44 45">
    <location>
        <position position="338"/>
    </location>
</feature>
<feature type="modified residue" description="Phosphoserine" evidence="36 44">
    <location>
        <position position="343"/>
    </location>
</feature>
<feature type="modified residue" description="Phosphothreonine" evidence="36 44">
    <location>
        <position position="369"/>
    </location>
</feature>
<feature type="modified residue" description="N6-acetyllysine" evidence="39">
    <location>
        <position position="384"/>
    </location>
</feature>
<feature type="modified residue" description="Phosphothreonine" evidence="44">
    <location>
        <position position="388"/>
    </location>
</feature>
<feature type="modified residue" description="Phosphoserine" evidence="41">
    <location>
        <position position="500"/>
    </location>
</feature>
<feature type="modified residue" description="Phosphoserine" evidence="40 44">
    <location>
        <position position="516"/>
    </location>
</feature>
<feature type="modified residue" description="Phosphoserine" evidence="45">
    <location>
        <position position="518"/>
    </location>
</feature>
<feature type="modified residue" description="Phosphoserine" evidence="36 40 44">
    <location>
        <position position="522"/>
    </location>
</feature>
<feature type="modified residue" description="Phosphoserine" evidence="36">
    <location>
        <position position="529"/>
    </location>
</feature>
<feature type="modified residue" description="Phosphothreonine" evidence="34">
    <location>
        <position position="588"/>
    </location>
</feature>
<feature type="modified residue" description="Phosphoserine" evidence="44">
    <location>
        <position position="607"/>
    </location>
</feature>
<feature type="modified residue" description="Phosphoserine" evidence="36 41 44">
    <location>
        <position position="614"/>
    </location>
</feature>
<feature type="modified residue" description="Phosphoserine" evidence="36 41 44">
    <location>
        <position position="619"/>
    </location>
</feature>
<feature type="modified residue" description="Phosphoserine" evidence="33 41">
    <location>
        <position position="633"/>
    </location>
</feature>
<feature type="modified residue" description="Phosphoserine" evidence="41 42 44">
    <location>
        <position position="687"/>
    </location>
</feature>
<feature type="modified residue" description="N6-acetyllysine" evidence="39">
    <location>
        <position position="718"/>
    </location>
</feature>
<feature type="modified residue" description="Phosphoserine" evidence="44">
    <location>
        <position position="891"/>
    </location>
</feature>
<feature type="modified residue" description="N6-acetyllysine" evidence="39">
    <location>
        <position position="954"/>
    </location>
</feature>
<feature type="modified residue" description="Phosphoserine" evidence="36">
    <location>
        <position position="1457"/>
    </location>
</feature>
<feature type="modified residue" description="Phosphoserine" evidence="44">
    <location>
        <position position="1461"/>
    </location>
</feature>
<feature type="modified residue" description="Phosphoserine" evidence="36 40 41 44">
    <location>
        <position position="1463"/>
    </location>
</feature>
<feature type="glycosylation site" description="O-linked (GlcNAc) serine" evidence="12">
    <location>
        <position position="534"/>
    </location>
</feature>
<feature type="glycosylation site" description="O-linked (GlcNAc) serine" evidence="12">
    <location>
        <position position="544"/>
    </location>
</feature>
<feature type="glycosylation site" description="O-linked (GlcNAc) serine" evidence="12">
    <location>
        <position position="908"/>
    </location>
</feature>
<feature type="glycosylation site" description="O-linked (GlcNAc) serine" evidence="12">
    <location>
        <position position="909"/>
    </location>
</feature>
<feature type="glycosylation site" description="O-linked (GlcNAc) serine" evidence="12">
    <location>
        <position position="1113"/>
    </location>
</feature>
<feature type="glycosylation site" description="O-linked (GlcNAc) threonine" evidence="12">
    <location>
        <position position="1156"/>
    </location>
</feature>
<feature type="cross-link" description="Glycyl lysine isopeptide (Lys-Gly) (interchain with G-Cter in SUMO2)" evidence="46 47 48">
    <location>
        <position position="353"/>
    </location>
</feature>
<feature type="splice variant" id="VSP_055134" description="In isoform 3." evidence="25">
    <original>E</original>
    <variation>ERQGLTVLPKLISSSCAQAIIPSWPLKVLRLQ</variation>
    <location>
        <position position="465"/>
    </location>
</feature>
<feature type="splice variant" id="VSP_054265" description="In isoform 2." evidence="26">
    <location>
        <begin position="574"/>
        <end position="615"/>
    </location>
</feature>
<feature type="sequence variant" id="VAR_046554" description="In dbSNP:rs16879902." evidence="9">
    <original>D</original>
    <variation>N</variation>
    <location>
        <position position="90"/>
    </location>
</feature>
<feature type="sequence variant" id="VAR_046555" description="In dbSNP:rs2228375.">
    <original>I</original>
    <variation>V</variation>
    <location>
        <position position="248"/>
    </location>
</feature>
<feature type="sequence variant" id="VAR_070841" description="In dbSNP:rs17857419." evidence="9">
    <original>V</original>
    <variation>F</variation>
    <location>
        <position position="381"/>
    </location>
</feature>
<feature type="sequence variant" id="VAR_046556" description="In dbSNP:rs6906499.">
    <original>N</original>
    <variation>K</variation>
    <location>
        <position position="402"/>
    </location>
</feature>
<feature type="sequence variant" id="VAR_090258" description="Found in a patient with spermatogenic failure; dbSNP:rs143083233." evidence="23">
    <original>P</original>
    <variation>L</variation>
    <location>
        <position position="485"/>
    </location>
</feature>
<feature type="sequence variant" id="VAR_046557" description="In dbSNP:rs6905654.">
    <original>P</original>
    <variation>L</variation>
    <location>
        <position position="821"/>
    </location>
</feature>
<feature type="sequence variant" id="VAR_046558" description="In dbSNP:rs2274136." evidence="7">
    <original>A</original>
    <variation>T</variation>
    <location>
        <position position="827"/>
    </location>
</feature>
<feature type="sequence variant" id="VAR_046559" description="In dbSNP:rs2228379.">
    <original>T</original>
    <variation>A</variation>
    <location>
        <position position="1388"/>
    </location>
</feature>
<feature type="mutagenesis site" description="Reduces binding to HIV-1 capsid protein p24 (CA)." evidence="20">
    <original>F</original>
    <variation>A</variation>
    <location>
        <position position="1415"/>
    </location>
</feature>
<feature type="sequence conflict" description="In Ref. 2; BAG58514." evidence="27" ref="2">
    <original>E</original>
    <variation>G</variation>
    <location>
        <position position="111"/>
    </location>
</feature>
<feature type="sequence conflict" description="In Ref. 1; CAA80982." evidence="27" ref="1">
    <original>TR</original>
    <variation>HA</variation>
    <location>
        <begin position="454"/>
        <end position="455"/>
    </location>
</feature>
<feature type="sequence conflict" description="In Ref. 2; BAG58514." evidence="27" ref="2">
    <original>C</original>
    <variation>S</variation>
    <location>
        <position position="813"/>
    </location>
</feature>
<feature type="sequence conflict" description="In Ref. 2; BAG58514." evidence="27" ref="2">
    <original>S</original>
    <variation>C</variation>
    <location>
        <position position="836"/>
    </location>
</feature>
<feature type="strand" evidence="49">
    <location>
        <begin position="723"/>
        <end position="727"/>
    </location>
</feature>
<feature type="strand" evidence="49">
    <location>
        <begin position="729"/>
        <end position="731"/>
    </location>
</feature>
<feature type="strand" evidence="49">
    <location>
        <begin position="743"/>
        <end position="745"/>
    </location>
</feature>
<feature type="helix" evidence="49">
    <location>
        <begin position="755"/>
        <end position="757"/>
    </location>
</feature>
<feature type="strand" evidence="51">
    <location>
        <begin position="794"/>
        <end position="796"/>
    </location>
</feature>
<feature type="strand" evidence="51">
    <location>
        <begin position="800"/>
        <end position="802"/>
    </location>
</feature>
<feature type="strand" evidence="51">
    <location>
        <begin position="814"/>
        <end position="816"/>
    </location>
</feature>
<feature type="strand" evidence="50">
    <location>
        <begin position="858"/>
        <end position="860"/>
    </location>
</feature>
<feature type="strand" evidence="50">
    <location>
        <begin position="872"/>
        <end position="874"/>
    </location>
</feature>
<feature type="strand" evidence="52">
    <location>
        <begin position="1416"/>
        <end position="1418"/>
    </location>
</feature>
<proteinExistence type="evidence at protein level"/>
<name>NU153_HUMAN</name>
<dbReference type="EMBL" id="Z25535">
    <property type="protein sequence ID" value="CAA80982.1"/>
    <property type="molecule type" value="mRNA"/>
</dbReference>
<dbReference type="EMBL" id="AK295644">
    <property type="protein sequence ID" value="BAG58514.1"/>
    <property type="molecule type" value="mRNA"/>
</dbReference>
<dbReference type="EMBL" id="AB210024">
    <property type="protein sequence ID" value="BAE06106.1"/>
    <property type="status" value="ALT_INIT"/>
    <property type="molecule type" value="mRNA"/>
</dbReference>
<dbReference type="EMBL" id="AL138824">
    <property type="status" value="NOT_ANNOTATED_CDS"/>
    <property type="molecule type" value="Genomic_DNA"/>
</dbReference>
<dbReference type="EMBL" id="AL157776">
    <property type="status" value="NOT_ANNOTATED_CDS"/>
    <property type="molecule type" value="Genomic_DNA"/>
</dbReference>
<dbReference type="EMBL" id="AL138724">
    <property type="status" value="NOT_ANNOTATED_CDS"/>
    <property type="molecule type" value="Genomic_DNA"/>
</dbReference>
<dbReference type="EMBL" id="BC052965">
    <property type="protein sequence ID" value="AAH52965.1"/>
    <property type="molecule type" value="mRNA"/>
</dbReference>
<dbReference type="CCDS" id="CCDS4541.1">
    <molecule id="P49790-1"/>
</dbReference>
<dbReference type="CCDS" id="CCDS64359.1">
    <molecule id="P49790-3"/>
</dbReference>
<dbReference type="CCDS" id="CCDS75407.1">
    <molecule id="P49790-2"/>
</dbReference>
<dbReference type="PIR" id="S42718">
    <property type="entry name" value="S42718"/>
</dbReference>
<dbReference type="RefSeq" id="NP_001265138.1">
    <molecule id="P49790-3"/>
    <property type="nucleotide sequence ID" value="NM_001278209.2"/>
</dbReference>
<dbReference type="RefSeq" id="NP_001265139.1">
    <molecule id="P49790-2"/>
    <property type="nucleotide sequence ID" value="NM_001278210.2"/>
</dbReference>
<dbReference type="RefSeq" id="NP_005115.2">
    <molecule id="P49790-1"/>
    <property type="nucleotide sequence ID" value="NM_005124.3"/>
</dbReference>
<dbReference type="PDB" id="2EBQ">
    <property type="method" value="NMR"/>
    <property type="chains" value="A=722-761"/>
</dbReference>
<dbReference type="PDB" id="2EBR">
    <property type="method" value="NMR"/>
    <property type="chains" value="A=851-890"/>
</dbReference>
<dbReference type="PDB" id="2EBV">
    <property type="method" value="NMR"/>
    <property type="chains" value="A=773-822"/>
</dbReference>
<dbReference type="PDB" id="2GQE">
    <property type="method" value="NMR"/>
    <property type="chains" value="A=722-750"/>
</dbReference>
<dbReference type="PDB" id="4U0C">
    <property type="method" value="X-ray"/>
    <property type="resolution" value="1.77 A"/>
    <property type="chains" value="B=1407-1423"/>
</dbReference>
<dbReference type="PDB" id="4U0D">
    <property type="method" value="X-ray"/>
    <property type="resolution" value="3.00 A"/>
    <property type="chains" value="M/N/O/P/Q/R=1407-1423"/>
</dbReference>
<dbReference type="PDB" id="5TSV">
    <property type="method" value="X-ray"/>
    <property type="resolution" value="2.50 A"/>
    <property type="chains" value="D=1407-1429"/>
</dbReference>
<dbReference type="PDB" id="5TSX">
    <property type="method" value="X-ray"/>
    <property type="resolution" value="1.90 A"/>
    <property type="chains" value="M/N/O/P/R/T=1407-1429"/>
</dbReference>
<dbReference type="PDB" id="6AYA">
    <property type="method" value="X-ray"/>
    <property type="resolution" value="2.40 A"/>
    <property type="chains" value="B=1407-1423"/>
</dbReference>
<dbReference type="PDB" id="8CKY">
    <property type="method" value="EM"/>
    <property type="resolution" value="2.60 A"/>
    <property type="chains" value="B=1407-1423"/>
</dbReference>
<dbReference type="PDB" id="8CL0">
    <property type="method" value="EM"/>
    <property type="resolution" value="3.12 A"/>
    <property type="chains" value="G/H/I/J/K/L=1407-1423"/>
</dbReference>
<dbReference type="PDB" id="9CNU">
    <property type="method" value="EM"/>
    <property type="resolution" value="2.99 A"/>
    <property type="chains" value="B=1411-1475"/>
</dbReference>
<dbReference type="PDBsum" id="2EBQ"/>
<dbReference type="PDBsum" id="2EBR"/>
<dbReference type="PDBsum" id="2EBV"/>
<dbReference type="PDBsum" id="2GQE"/>
<dbReference type="PDBsum" id="4U0C"/>
<dbReference type="PDBsum" id="4U0D"/>
<dbReference type="PDBsum" id="5TSV"/>
<dbReference type="PDBsum" id="5TSX"/>
<dbReference type="PDBsum" id="6AYA"/>
<dbReference type="PDBsum" id="8CKY"/>
<dbReference type="PDBsum" id="8CL0"/>
<dbReference type="PDBsum" id="9CNU"/>
<dbReference type="EMDB" id="EMD-16706"/>
<dbReference type="EMDB" id="EMD-16708"/>
<dbReference type="EMDB" id="EMD-45760"/>
<dbReference type="SASBDB" id="P49790"/>
<dbReference type="SMR" id="P49790"/>
<dbReference type="BioGRID" id="115297">
    <property type="interactions" value="232"/>
</dbReference>
<dbReference type="ComplexPortal" id="CPX-873">
    <property type="entry name" value="Nuclear pore complex"/>
</dbReference>
<dbReference type="CORUM" id="P49790"/>
<dbReference type="DIP" id="DIP-38185N"/>
<dbReference type="FunCoup" id="P49790">
    <property type="interactions" value="4088"/>
</dbReference>
<dbReference type="IntAct" id="P49790">
    <property type="interactions" value="167"/>
</dbReference>
<dbReference type="MINT" id="P49790"/>
<dbReference type="STRING" id="9606.ENSP00000444029"/>
<dbReference type="TCDB" id="1.I.1.1.3">
    <property type="family name" value="the nuclear pore complex (npc) family"/>
</dbReference>
<dbReference type="GlyConnect" id="2878">
    <property type="glycosylation" value="1 O-GlcNAc glycan (8 sites)"/>
</dbReference>
<dbReference type="GlyCosmos" id="P49790">
    <property type="glycosylation" value="131 sites, 2 glycans"/>
</dbReference>
<dbReference type="GlyGen" id="P49790">
    <property type="glycosylation" value="153 sites, 2 O-linked glycans (151 sites)"/>
</dbReference>
<dbReference type="iPTMnet" id="P49790"/>
<dbReference type="MetOSite" id="P49790"/>
<dbReference type="PhosphoSitePlus" id="P49790"/>
<dbReference type="SwissPalm" id="P49790"/>
<dbReference type="BioMuta" id="NUP153"/>
<dbReference type="DMDM" id="206729891"/>
<dbReference type="jPOST" id="P49790"/>
<dbReference type="MassIVE" id="P49790"/>
<dbReference type="PaxDb" id="9606-ENSP00000444029"/>
<dbReference type="PeptideAtlas" id="P49790"/>
<dbReference type="ProteomicsDB" id="27856"/>
<dbReference type="ProteomicsDB" id="56120">
    <molecule id="P49790-1"/>
</dbReference>
<dbReference type="Pumba" id="P49790"/>
<dbReference type="Antibodypedia" id="10334">
    <property type="antibodies" value="185 antibodies from 35 providers"/>
</dbReference>
<dbReference type="DNASU" id="9972"/>
<dbReference type="Ensembl" id="ENST00000262077.3">
    <molecule id="P49790-1"/>
    <property type="protein sequence ID" value="ENSP00000262077.3"/>
    <property type="gene ID" value="ENSG00000124789.12"/>
</dbReference>
<dbReference type="Ensembl" id="ENST00000537253.5">
    <molecule id="P49790-3"/>
    <property type="protein sequence ID" value="ENSP00000444029.1"/>
    <property type="gene ID" value="ENSG00000124789.12"/>
</dbReference>
<dbReference type="Ensembl" id="ENST00000613258.4">
    <molecule id="P49790-2"/>
    <property type="protein sequence ID" value="ENSP00000478627.1"/>
    <property type="gene ID" value="ENSG00000124789.12"/>
</dbReference>
<dbReference type="GeneID" id="9972"/>
<dbReference type="KEGG" id="hsa:9972"/>
<dbReference type="MANE-Select" id="ENST00000262077.3">
    <property type="protein sequence ID" value="ENSP00000262077.3"/>
    <property type="RefSeq nucleotide sequence ID" value="NM_005124.4"/>
    <property type="RefSeq protein sequence ID" value="NP_005115.2"/>
</dbReference>
<dbReference type="UCSC" id="uc003ncd.3">
    <molecule id="P49790-1"/>
    <property type="organism name" value="human"/>
</dbReference>
<dbReference type="AGR" id="HGNC:8062"/>
<dbReference type="CTD" id="9972"/>
<dbReference type="DisGeNET" id="9972"/>
<dbReference type="GeneCards" id="NUP153"/>
<dbReference type="HGNC" id="HGNC:8062">
    <property type="gene designation" value="NUP153"/>
</dbReference>
<dbReference type="HPA" id="ENSG00000124789">
    <property type="expression patterns" value="Low tissue specificity"/>
</dbReference>
<dbReference type="MIM" id="603948">
    <property type="type" value="gene"/>
</dbReference>
<dbReference type="neXtProt" id="NX_P49790"/>
<dbReference type="OpenTargets" id="ENSG00000124789"/>
<dbReference type="PharmGKB" id="PA31848"/>
<dbReference type="VEuPathDB" id="HostDB:ENSG00000124789"/>
<dbReference type="eggNOG" id="KOG4719">
    <property type="taxonomic scope" value="Eukaryota"/>
</dbReference>
<dbReference type="GeneTree" id="ENSGT00940000153253"/>
<dbReference type="HOGENOM" id="CLU_004629_1_0_1"/>
<dbReference type="InParanoid" id="P49790"/>
<dbReference type="OMA" id="SASEWEC"/>
<dbReference type="OrthoDB" id="79830at2759"/>
<dbReference type="PAN-GO" id="P49790">
    <property type="GO annotations" value="5 GO annotations based on evolutionary models"/>
</dbReference>
<dbReference type="PhylomeDB" id="P49790"/>
<dbReference type="TreeFam" id="TF323517"/>
<dbReference type="PathwayCommons" id="P49790"/>
<dbReference type="Reactome" id="R-HSA-1169408">
    <property type="pathway name" value="ISG15 antiviral mechanism"/>
</dbReference>
<dbReference type="Reactome" id="R-HSA-159227">
    <property type="pathway name" value="Transport of the SLBP independent Mature mRNA"/>
</dbReference>
<dbReference type="Reactome" id="R-HSA-159230">
    <property type="pathway name" value="Transport of the SLBP Dependant Mature mRNA"/>
</dbReference>
<dbReference type="Reactome" id="R-HSA-159231">
    <property type="pathway name" value="Transport of Mature mRNA Derived from an Intronless Transcript"/>
</dbReference>
<dbReference type="Reactome" id="R-HSA-159236">
    <property type="pathway name" value="Transport of Mature mRNA derived from an Intron-Containing Transcript"/>
</dbReference>
<dbReference type="Reactome" id="R-HSA-165054">
    <property type="pathway name" value="Rev-mediated nuclear export of HIV RNA"/>
</dbReference>
<dbReference type="Reactome" id="R-HSA-168271">
    <property type="pathway name" value="Transport of Ribonucleoproteins into the Host Nucleus"/>
</dbReference>
<dbReference type="Reactome" id="R-HSA-168276">
    <property type="pathway name" value="NS1 Mediated Effects on Host Pathways"/>
</dbReference>
<dbReference type="Reactome" id="R-HSA-168325">
    <property type="pathway name" value="Viral Messenger RNA Synthesis"/>
</dbReference>
<dbReference type="Reactome" id="R-HSA-168333">
    <property type="pathway name" value="NEP/NS2 Interacts with the Cellular Export Machinery"/>
</dbReference>
<dbReference type="Reactome" id="R-HSA-170822">
    <property type="pathway name" value="Regulation of Glucokinase by Glucokinase Regulatory Protein"/>
</dbReference>
<dbReference type="Reactome" id="R-HSA-180746">
    <property type="pathway name" value="Nuclear import of Rev protein"/>
</dbReference>
<dbReference type="Reactome" id="R-HSA-180910">
    <property type="pathway name" value="Vpr-mediated nuclear import of PICs"/>
</dbReference>
<dbReference type="Reactome" id="R-HSA-191859">
    <property type="pathway name" value="snRNP Assembly"/>
</dbReference>
<dbReference type="Reactome" id="R-HSA-3108214">
    <property type="pathway name" value="SUMOylation of DNA damage response and repair proteins"/>
</dbReference>
<dbReference type="Reactome" id="R-HSA-3232142">
    <property type="pathway name" value="SUMOylation of ubiquitinylation proteins"/>
</dbReference>
<dbReference type="Reactome" id="R-HSA-3301854">
    <property type="pathway name" value="Nuclear Pore Complex (NPC) Disassembly"/>
</dbReference>
<dbReference type="Reactome" id="R-HSA-3371453">
    <property type="pathway name" value="Regulation of HSF1-mediated heat shock response"/>
</dbReference>
<dbReference type="Reactome" id="R-HSA-4085377">
    <property type="pathway name" value="SUMOylation of SUMOylation proteins"/>
</dbReference>
<dbReference type="Reactome" id="R-HSA-4551638">
    <property type="pathway name" value="SUMOylation of chromatin organization proteins"/>
</dbReference>
<dbReference type="Reactome" id="R-HSA-4570464">
    <property type="pathway name" value="SUMOylation of RNA binding proteins"/>
</dbReference>
<dbReference type="Reactome" id="R-HSA-4615885">
    <property type="pathway name" value="SUMOylation of DNA replication proteins"/>
</dbReference>
<dbReference type="Reactome" id="R-HSA-5578749">
    <property type="pathway name" value="Transcriptional regulation by small RNAs"/>
</dbReference>
<dbReference type="Reactome" id="R-HSA-5619107">
    <property type="pathway name" value="Defective TPR may confer susceptibility towards thyroid papillary carcinoma (TPC)"/>
</dbReference>
<dbReference type="Reactome" id="R-HSA-6784531">
    <property type="pathway name" value="tRNA processing in the nucleus"/>
</dbReference>
<dbReference type="Reactome" id="R-HSA-9609690">
    <property type="pathway name" value="HCMV Early Events"/>
</dbReference>
<dbReference type="Reactome" id="R-HSA-9610379">
    <property type="pathway name" value="HCMV Late Events"/>
</dbReference>
<dbReference type="Reactome" id="R-HSA-9705671">
    <property type="pathway name" value="SARS-CoV-2 activates/modulates innate and adaptive immune responses"/>
</dbReference>
<dbReference type="SignaLink" id="P49790"/>
<dbReference type="SIGNOR" id="P49790"/>
<dbReference type="BioGRID-ORCS" id="9972">
    <property type="hits" value="575 hits in 1178 CRISPR screens"/>
</dbReference>
<dbReference type="CD-CODE" id="D6A53B8E">
    <property type="entry name" value="Nuclear pore complex"/>
</dbReference>
<dbReference type="CD-CODE" id="DEE660B4">
    <property type="entry name" value="Stress granule"/>
</dbReference>
<dbReference type="ChiTaRS" id="NUP153">
    <property type="organism name" value="human"/>
</dbReference>
<dbReference type="EvolutionaryTrace" id="P49790"/>
<dbReference type="GeneWiki" id="NUP153"/>
<dbReference type="GenomeRNAi" id="9972"/>
<dbReference type="Pharos" id="P49790">
    <property type="development level" value="Tbio"/>
</dbReference>
<dbReference type="PRO" id="PR:P49790"/>
<dbReference type="Proteomes" id="UP000005640">
    <property type="component" value="Chromosome 6"/>
</dbReference>
<dbReference type="RNAct" id="P49790">
    <property type="molecule type" value="protein"/>
</dbReference>
<dbReference type="Bgee" id="ENSG00000124789">
    <property type="expression patterns" value="Expressed in secondary oocyte and 213 other cell types or tissues"/>
</dbReference>
<dbReference type="GO" id="GO:0005829">
    <property type="term" value="C:cytosol"/>
    <property type="evidence" value="ECO:0000314"/>
    <property type="project" value="HPA"/>
</dbReference>
<dbReference type="GO" id="GO:0043657">
    <property type="term" value="C:host cell"/>
    <property type="evidence" value="ECO:0007669"/>
    <property type="project" value="GOC"/>
</dbReference>
<dbReference type="GO" id="GO:0016020">
    <property type="term" value="C:membrane"/>
    <property type="evidence" value="ECO:0000315"/>
    <property type="project" value="CACAO"/>
</dbReference>
<dbReference type="GO" id="GO:0005635">
    <property type="term" value="C:nuclear envelope"/>
    <property type="evidence" value="ECO:0000314"/>
    <property type="project" value="ComplexPortal"/>
</dbReference>
<dbReference type="GO" id="GO:0042405">
    <property type="term" value="C:nuclear inclusion body"/>
    <property type="evidence" value="ECO:0000314"/>
    <property type="project" value="UniProtKB"/>
</dbReference>
<dbReference type="GO" id="GO:0031965">
    <property type="term" value="C:nuclear membrane"/>
    <property type="evidence" value="ECO:0000314"/>
    <property type="project" value="HPA"/>
</dbReference>
<dbReference type="GO" id="GO:0034399">
    <property type="term" value="C:nuclear periphery"/>
    <property type="evidence" value="ECO:0000314"/>
    <property type="project" value="UniProtKB"/>
</dbReference>
<dbReference type="GO" id="GO:0005643">
    <property type="term" value="C:nuclear pore"/>
    <property type="evidence" value="ECO:0000314"/>
    <property type="project" value="UniProtKB"/>
</dbReference>
<dbReference type="GO" id="GO:0044615">
    <property type="term" value="C:nuclear pore nuclear basket"/>
    <property type="evidence" value="ECO:0000314"/>
    <property type="project" value="UniProtKB"/>
</dbReference>
<dbReference type="GO" id="GO:0005730">
    <property type="term" value="C:nucleolus"/>
    <property type="evidence" value="ECO:0000314"/>
    <property type="project" value="HPA"/>
</dbReference>
<dbReference type="GO" id="GO:0005654">
    <property type="term" value="C:nucleoplasm"/>
    <property type="evidence" value="ECO:0000314"/>
    <property type="project" value="HPA"/>
</dbReference>
<dbReference type="GO" id="GO:0003677">
    <property type="term" value="F:DNA binding"/>
    <property type="evidence" value="ECO:0007669"/>
    <property type="project" value="UniProtKB-KW"/>
</dbReference>
<dbReference type="GO" id="GO:0042802">
    <property type="term" value="F:identical protein binding"/>
    <property type="evidence" value="ECO:0000353"/>
    <property type="project" value="IntAct"/>
</dbReference>
<dbReference type="GO" id="GO:0140693">
    <property type="term" value="F:molecular condensate scaffold activity"/>
    <property type="evidence" value="ECO:0000314"/>
    <property type="project" value="DisProt"/>
</dbReference>
<dbReference type="GO" id="GO:0008139">
    <property type="term" value="F:nuclear localization sequence binding"/>
    <property type="evidence" value="ECO:0000318"/>
    <property type="project" value="GO_Central"/>
</dbReference>
<dbReference type="GO" id="GO:0043495">
    <property type="term" value="F:protein-membrane adaptor activity"/>
    <property type="evidence" value="ECO:0000315"/>
    <property type="project" value="UniProtKB"/>
</dbReference>
<dbReference type="GO" id="GO:0017056">
    <property type="term" value="F:structural constituent of nuclear pore"/>
    <property type="evidence" value="ECO:0000314"/>
    <property type="project" value="UniProtKB"/>
</dbReference>
<dbReference type="GO" id="GO:0008270">
    <property type="term" value="F:zinc ion binding"/>
    <property type="evidence" value="ECO:0007669"/>
    <property type="project" value="UniProtKB-KW"/>
</dbReference>
<dbReference type="GO" id="GO:1990000">
    <property type="term" value="P:amyloid fibril formation"/>
    <property type="evidence" value="ECO:0000353"/>
    <property type="project" value="DisProt"/>
</dbReference>
<dbReference type="GO" id="GO:0051028">
    <property type="term" value="P:mRNA transport"/>
    <property type="evidence" value="ECO:0007669"/>
    <property type="project" value="UniProtKB-KW"/>
</dbReference>
<dbReference type="GO" id="GO:0046832">
    <property type="term" value="P:negative regulation of RNA export from nucleus"/>
    <property type="evidence" value="ECO:0000314"/>
    <property type="project" value="UniProtKB"/>
</dbReference>
<dbReference type="GO" id="GO:0051292">
    <property type="term" value="P:nuclear pore complex assembly"/>
    <property type="evidence" value="ECO:0000315"/>
    <property type="project" value="UniProtKB"/>
</dbReference>
<dbReference type="GO" id="GO:0006913">
    <property type="term" value="P:nucleocytoplasmic transport"/>
    <property type="evidence" value="ECO:0000303"/>
    <property type="project" value="ComplexPortal"/>
</dbReference>
<dbReference type="GO" id="GO:0006606">
    <property type="term" value="P:protein import into nucleus"/>
    <property type="evidence" value="ECO:0000318"/>
    <property type="project" value="GO_Central"/>
</dbReference>
<dbReference type="GO" id="GO:0006405">
    <property type="term" value="P:RNA export from nucleus"/>
    <property type="evidence" value="ECO:0000318"/>
    <property type="project" value="GO_Central"/>
</dbReference>
<dbReference type="GO" id="GO:0046718">
    <property type="term" value="P:symbiont entry into host cell"/>
    <property type="evidence" value="ECO:0007669"/>
    <property type="project" value="UniProtKB-KW"/>
</dbReference>
<dbReference type="GO" id="GO:0075732">
    <property type="term" value="P:viral penetration into host nucleus"/>
    <property type="evidence" value="ECO:0007669"/>
    <property type="project" value="UniProtKB-KW"/>
</dbReference>
<dbReference type="DisProt" id="DP01799"/>
<dbReference type="FunFam" id="4.10.1060.10:FF:000001">
    <property type="entry name" value="Nuclear pore complex protein Nup153"/>
    <property type="match status" value="3"/>
</dbReference>
<dbReference type="FunFam" id="4.10.1060.10:FF:000015">
    <property type="entry name" value="Nuclear pore complex protein Nup153"/>
    <property type="match status" value="1"/>
</dbReference>
<dbReference type="Gene3D" id="4.10.1060.10">
    <property type="entry name" value="Zinc finger, RanBP2-type"/>
    <property type="match status" value="4"/>
</dbReference>
<dbReference type="InterPro" id="IPR026054">
    <property type="entry name" value="Nucleoporin"/>
</dbReference>
<dbReference type="InterPro" id="IPR013913">
    <property type="entry name" value="Nup153_N"/>
</dbReference>
<dbReference type="InterPro" id="IPR018892">
    <property type="entry name" value="Retro-transposon_transp_CS"/>
</dbReference>
<dbReference type="InterPro" id="IPR001876">
    <property type="entry name" value="Znf_RanBP2"/>
</dbReference>
<dbReference type="InterPro" id="IPR036443">
    <property type="entry name" value="Znf_RanBP2_sf"/>
</dbReference>
<dbReference type="PANTHER" id="PTHR23193">
    <property type="entry name" value="NUCLEAR PORE COMPLEX PROTEIN NUP"/>
    <property type="match status" value="1"/>
</dbReference>
<dbReference type="PANTHER" id="PTHR23193:SF23">
    <property type="entry name" value="NUCLEAR PORE COMPLEX PROTEIN NUP153"/>
    <property type="match status" value="1"/>
</dbReference>
<dbReference type="Pfam" id="PF08604">
    <property type="entry name" value="Nup153"/>
    <property type="match status" value="1"/>
</dbReference>
<dbReference type="Pfam" id="PF10599">
    <property type="entry name" value="Nup_retrotrp_bd"/>
    <property type="match status" value="1"/>
</dbReference>
<dbReference type="Pfam" id="PF00641">
    <property type="entry name" value="Zn_ribbon_RanBP"/>
    <property type="match status" value="4"/>
</dbReference>
<dbReference type="SMART" id="SM00547">
    <property type="entry name" value="ZnF_RBZ"/>
    <property type="match status" value="4"/>
</dbReference>
<dbReference type="SUPFAM" id="SSF90209">
    <property type="entry name" value="Ran binding protein zinc finger-like"/>
    <property type="match status" value="4"/>
</dbReference>
<dbReference type="PROSITE" id="PS01358">
    <property type="entry name" value="ZF_RANBP2_1"/>
    <property type="match status" value="4"/>
</dbReference>
<dbReference type="PROSITE" id="PS50199">
    <property type="entry name" value="ZF_RANBP2_2"/>
    <property type="match status" value="4"/>
</dbReference>